<comment type="function">
    <text evidence="2 17 18 20 21">Multifunctional transcription factor that induces cell cycle arrest, DNA repair or apoptosis upon binding to its target DNA sequence (PubMed:19556538, PubMed:20673990, PubMed:22726440). Acts as a tumor suppressor in many tumor types; induces growth arrest or apoptosis depending on the physiological circumstances and cell type. Negatively regulates cell division by controlling expression of a set of genes required for this process. One of the activated genes is an inhibitor of cyclin-dependent kinases. Apoptosis induction seems to be mediated either by stimulation of BAX and FAS antigen expression, or by repression of Bcl-2 expression. Its pro-apoptotic activity is activated via its interaction with PPP1R13B/ASPP1 or TP53BP2/ASPP2 (By similarity). However, this activity is inhibited when the interaction with PPP1R13B/ASPP1 or TP53BP2/ASPP2 is displaced by PPP1R13L/iASPP (By similarity). In cooperation with mitochondrial PPIF is involved in activating oxidative stress-induced necrosis; the function is largely independent of transcription. Prevents CDK7 kinase activity when associated to CAK complex in response to DNA damage, thus stopping cell cycle progression (By similarity). Induces the transcription of long intergenic non-coding RNA p21 (lincRNA-p21) and lincRNA-Mkln1. LincRNA-p21 participates in TP53-dependent transcriptional repression leading to apoptosis, but seems to have to effect on cell-cycle regulation. Regulates the circadian clock by repressing CLOCK-BMAL1-mediated transcriptional activation of PER2 (PubMed:24051492).</text>
</comment>
<comment type="cofactor">
    <cofactor evidence="12">
        <name>Zn(2+)</name>
        <dbReference type="ChEBI" id="CHEBI:29105"/>
    </cofactor>
    <text evidence="12">Binds 1 zinc ion per subunit.</text>
</comment>
<comment type="subunit">
    <text evidence="2 3 5 6 7 8 9 11 14 16 17 22 26">Forms homodimers and homotetramers (By similarity). Binds DNA as a homotetramer. Interacts with AXIN1 (PubMed:15526030). Probably part of a complex consisting of TP53, HIPK2 and AXIN1 (PubMed:15526030). Interacts with histone acetyltransferases EP300 and methyltransferases HRMT1L2 and CARM1, and recruits them to promoters. Interacts (via C-terminus) with TAF1; when TAF1 is part of the TFIID complex. Interacts with ING4; this interaction may be indirect (PubMed:12702766). Found in a complex with CABLES1 and TP73 (PubMed:11706030). Interacts with HIPK1, HIPK2, and TP53INP1. Interacts with WWOX. Interacts with USP7 and SYVN1 (PubMed:14719112). Interacts with HSP90AB1. Interacts with CHD8; leading to recruit histone H1 and prevent transactivation activity (PubMed:19151705). Interacts with ARMC10, BANP, CDKN2AIP, NUAK1, STK11/LKB1, UHRF2 and E4F (PubMed:10644996). Interacts with YWHAZ; the interaction enhances TP53 transcriptional activity. Phosphorylation of YWHAZ on 'Ser-58' inhibits this interaction. Interacts (via DNA-binding domain) with MAML1 (via N-terminus). Interacts with MKRN1. Interacts with PML (via C-terminus). Interacts with MDM2; leading to ubiquitination and proteasomal degradation of TP53. Directly interacts with FBXO42; leading to ubiquitination and degradation of TP53. Interacts (phosphorylated at Ser-18 by ATM) with the phosphatase PP2A-PPP2R5C holoenzyme; regulates stress-induced TP53-dependent inhibition of cell proliferation. Interacts with PPP2R2A. Interacts with AURKA, DAXX, BRD7 and TRIM24 (PubMed:19556538). Interacts (when monomethylated at Lys-379) with L3MBTL1. Interacts with GRK5. Binds to the CAK complex (CDK7, cyclin H and MAT1) in response to DNA damage. Interacts with CDK5 in neurons. Interacts with AURKB, SETD2, UHRF2 and NOC2L. Interacts (via N-terminus) with PTK2/FAK1; this promotes ubiquitination by MDM2. Interacts with PTK2B/PYK2; this promotes ubiquitination by MDM2. Interacts with PRKCG. Interacts with PPIF; the association implicates preferentially tetrameric TP53, is induced by oxidative stress and is impaired by cyclosporin A (CsA). Interacts with SNAI1; the interaction induces SNAI1 degradation via MDM2-mediated ubiquitination and inhibits SNAI1-induced cell invasion. Interacts with UBC9. Interacts with ZNF385B; the interaction is direct. Interacts (via DNA-binding domain) with ZNF385A; the interaction is direct and enhances p53/TP53 transactivation functions on cell-cycle arrest target genes, resulting in growth arrest (PubMed:17719541). Interacts with ANKRD2. Interacts with RFFL and RNF34; involved in p53/TP53 ubiquitination. Interacts with MTA1 and COP1. Interacts with CCAR2 (via N-terminus). Interacts with MORC3. Interacts (via C-terminus) with POU4F2 (via C-terminus). Interacts (via oligomerization region) with NOP53; the interaction is direct and may prevent the MDM2-mediated proteasomal degradation of TP53. Interacts with AFG1L; mediates mitochondrial translocation of TP53. Interacts with UBD (By similarity). Interacts with TAF6 (By similarity). Interacts with C10orf90/FATS; the interaction inhibits binding of TP53 and MDM2 (PubMed:24240685). Interacts with NUPR1; interaction is stress-dependent. Forms a complex with EP300 and NUPR1; this complex binds CDKN1A promoter leading to transcriptional induction of CDKN1A (By similarity). Interacts with PRMT5 in response to DNA damage; the interaction is TTC5/STRAP dependent (By similarity). Interacts with PPP1R13L (via SH3 domain and ANK repeats); the interaction inhibits pro-apoptotic activity of p53/TP53 (By similarity). Interacts with PPP1R13B/ASPP1 and TP53BP2/ASPP2; the interactions promotes pro-apoptotic activity (By similarity). When phosphorylated at Ser-18, interacts with DDX3X and gamma-tubulin (By similarity). Interacts with KAT7/HBO1; leading to inhibit histone acetyltransferase activity of KAT7/HBO1 (By similarity). Interacts (via N-terminus) with E3 ubiquitin-protein ligase MUL1; the interaction results in ubiquitination of cytoplasmic TP53 at Lys-27 and subsequent proteasomal degradation (By similarity). Interacts with S100A4; this interaction promotes TP53 degradation (By similarity). Interacts with TTC5/STRAP; the interaction may result in increased mitochondrial-dependent apoptosis (By similarity). Interacts with NQO1; this interaction is NADH-dependent, stabilizes TP53 in response to oxidative stress and protects it from ubiquitin-independent degradation by the 20S proteasome (By similarity). Interacts with DAZAP2 at TP53 target gene promoters; the interaction is triggered by DNA damage and leads to modulation of the expression of a subset of TP53 target genes, reducing DNA damage-induced cell death by limiting the expression of cell death-mediating TP53 target genes (By similarity). Interacts (via N-terminus) with ZNF768 (via zinc-finger domains); interaction might be facilitated by TP53 oligomerization state (By similarity). Forms a ternary complex with ALDOB and G6PD; this interaction is direct. ALDOB stabilizes the complex inhibiting G6PD activity and keeping oxidative pentose phosphate metabolism in check. Interacts with MORN3; the interactions mediate post-transcriptional modifications of TP53 by MDM2 and SIRT1 (By similarity). Interacts with HSPA9/MOT-2; the interaction promotes the degradation of TP53 (By similarity). Interacts with FBXO22; this interaction promotes TP53 proteasomal degradation (By similarity).</text>
</comment>
<comment type="interaction">
    <interactant intactId="EBI-474016">
        <id>P02340</id>
    </interactant>
    <interactant intactId="EBI-2552417">
        <id>P97302</id>
        <label>Bach1</label>
    </interactant>
    <organismsDiffer>false</organismsDiffer>
    <experiments>4</experiments>
</comment>
<comment type="interaction">
    <interactant intactId="EBI-474016">
        <id>P02340</id>
    </interactant>
    <interactant intactId="EBI-3953360">
        <id>B2RWS6</id>
        <label>Ep300</label>
    </interactant>
    <organismsDiffer>false</organismsDiffer>
    <experiments>3</experiments>
</comment>
<comment type="interaction">
    <interactant intactId="EBI-474016">
        <id>P02340</id>
    </interactant>
    <interactant intactId="EBI-641788">
        <id>P23804</id>
        <label>Mdm2</label>
    </interactant>
    <organismsDiffer>false</organismsDiffer>
    <experiments>9</experiments>
</comment>
<comment type="interaction">
    <interactant intactId="EBI-474016">
        <id>P02340</id>
    </interactant>
    <interactant intactId="EBI-3386476">
        <id>P23804-1</id>
        <label>Mdm2</label>
    </interactant>
    <organismsDiffer>false</organismsDiffer>
    <experiments>2</experiments>
</comment>
<comment type="interaction">
    <interactant intactId="EBI-474016">
        <id>P02340</id>
    </interactant>
    <interactant intactId="EBI-2432975">
        <id>Q9QUR7</id>
        <label>Pin1</label>
    </interactant>
    <organismsDiffer>false</organismsDiffer>
    <experiments>3</experiments>
</comment>
<comment type="interaction">
    <interactant intactId="EBI-474016">
        <id>P02340</id>
    </interactant>
    <interactant intactId="EBI-863636">
        <id>P54099</id>
        <label>Polg</label>
    </interactant>
    <organismsDiffer>false</organismsDiffer>
    <experiments>2</experiments>
</comment>
<comment type="interaction">
    <interactant intactId="EBI-474016">
        <id>P02340</id>
    </interactant>
    <interactant intactId="EBI-6455001">
        <id>Q99KR7</id>
        <label>Ppif</label>
    </interactant>
    <organismsDiffer>false</organismsDiffer>
    <experiments>2</experiments>
</comment>
<comment type="interaction">
    <interactant intactId="EBI-474016">
        <id>P02340</id>
    </interactant>
    <interactant intactId="EBI-1186266">
        <id>O08586</id>
        <label>Pten</label>
    </interactant>
    <organismsDiffer>false</organismsDiffer>
    <experiments>4</experiments>
</comment>
<comment type="interaction">
    <interactant intactId="EBI-474016">
        <id>P02340</id>
    </interactant>
    <interactant intactId="EBI-371529">
        <id>Q61466</id>
        <label>Smarcd1</label>
    </interactant>
    <organismsDiffer>false</organismsDiffer>
    <experiments>4</experiments>
</comment>
<comment type="interaction">
    <interactant intactId="EBI-474016">
        <id>P02340</id>
    </interactant>
    <interactant intactId="EBI-1635071">
        <id>P09671</id>
        <label>Sod2</label>
    </interactant>
    <organismsDiffer>false</organismsDiffer>
    <experiments>2</experiments>
</comment>
<comment type="interaction">
    <interactant intactId="EBI-474016">
        <id>P02340</id>
    </interactant>
    <interactant intactId="EBI-307947">
        <id>Q64127</id>
        <label>Trim24</label>
    </interactant>
    <organismsDiffer>false</organismsDiffer>
    <experiments>2</experiments>
</comment>
<comment type="interaction">
    <interactant intactId="EBI-474016">
        <id>P02340</id>
    </interactant>
    <interactant intactId="EBI-413074">
        <id>P62991</id>
        <label>Ubc</label>
    </interactant>
    <organismsDiffer>false</organismsDiffer>
    <experiments>4</experiments>
</comment>
<comment type="interaction">
    <interactant intactId="EBI-474016">
        <id>P02340</id>
    </interactant>
    <interactant intactId="EBI-287195">
        <id>Q07817-1</id>
        <label>BCL2L1</label>
    </interactant>
    <organismsDiffer>true</organismsDiffer>
    <experiments>3</experiments>
</comment>
<comment type="interaction">
    <interactant intactId="EBI-474016">
        <id>P02340</id>
    </interactant>
    <interactant intactId="EBI-617698">
        <id>P03070</id>
    </interactant>
    <organismsDiffer>true</organismsDiffer>
    <experiments>20</experiments>
</comment>
<comment type="subcellular location">
    <subcellularLocation>
        <location evidence="2">Cytoplasm</location>
    </subcellularLocation>
    <subcellularLocation>
        <location evidence="2">Nucleus</location>
    </subcellularLocation>
    <subcellularLocation>
        <location evidence="2">Nucleus</location>
        <location evidence="2">PML body</location>
    </subcellularLocation>
    <subcellularLocation>
        <location evidence="2">Endoplasmic reticulum</location>
    </subcellularLocation>
    <subcellularLocation>
        <location evidence="2">Mitochondrion matrix</location>
    </subcellularLocation>
    <subcellularLocation>
        <location evidence="2">Cytoplasm</location>
        <location evidence="2">Cytoskeleton</location>
        <location evidence="2">Microtubule organizing center</location>
        <location evidence="2">Centrosome</location>
    </subcellularLocation>
    <text evidence="2">Interaction with BANP promotes nuclear localization. Recruited into PML bodies together with CHEK2. Translocates to mitochondria upon oxidative stress. Translocates to mitochondria in response to mitomycin C treatment (By similarity). Competitive inhibition of TP53 interaction with HSPA9/MOT-2 by UBXN2A results in increased protein abundance and subsequent translocation of TP53 to the nucleus (By similarity).</text>
</comment>
<comment type="induction">
    <text evidence="21">Expressed in a circadian manner in the suprachiasmatic nucleus (SCN) of the brain with a peak seen at ZT8.</text>
</comment>
<comment type="domain">
    <text evidence="2">The N-terminal and C-terminal disordered regions undergo liquid-liquid phase separation (LLPS) following homotetramerization and activation. Post-translational modifications, such as phosphorylation or lactylation affect the ability to undergo LLPS.</text>
</comment>
<comment type="domain">
    <text evidence="2">The nuclear export signal acts as a transcriptional repression domain. The TADI and TADII motifs (residues 17 to 25 and 48 to 56) correspond both to 9aaTAD motifs which are transactivation domains present in a large number of yeast and animal transcription factors.</text>
</comment>
<comment type="PTM">
    <text evidence="1 2 8 10 13 15 17 19 24">Phosphorylation on Ser residues mediates transcriptional activation. Phosphorylation at Ser-12 by HIPK4 increases repression activity on BIRC5 promoter. Phosphorylated on Thr-21 by VRK1. Phosphorylated on Ser-23 by CHEK2 in response to DNA damage, which prevents ubiquitination by MDM2. Phosphorylated on Ser-23 by PLK3 in response to reactive oxygen species (ROS), promoting p53/TP53-mediated apoptosis. Probably phosphorylated on by CDK7 in a CAK complex in response to DNA damage. Stabilized by CDK5-mediated phosphorylation in response to genotoxic and oxidative stresses at Ser-18 leading to accumulation of p53/TP53, particularly in the nucleus, thus inducing the transactivation of p53/TP53 target genes (By similarity). Phosphorylated on Ser-389 following UV but not gamma irradiation. Phosphorylated by HIPK1. Phosphorylation at Ser-18 is required for interaction with DDX3X and gamma-tubulin (By similarity). Phosphorylation at Ser-389 regulates its ability to undergo liquid-liquid phase separation by increasing fluidity of TP53/p53 condensates (By similarity).</text>
</comment>
<comment type="PTM">
    <text evidence="2 22 23">Ubiquitinated by MDM2 and SYVN1, which leads to proteasomal degradation. Ubiquitinated by RFWD3, which works in cooperation with MDM2 and may catalyze the formation of short polyubiquitin chains on p53/TP53 that are not targeted to the proteasome. Ubiquitinated by MKRN1 at Lys-288 and Lys-289, which leads to proteasomal degradation. Deubiquitinated by USP10, leading to stabilize it. Ubiquitinated by TRIM24, RFFL, RNF34 and RNF125, which leads to proteasomal degradation. Ubiquitination by TOPORS induces degradation. Deubiquitination by USP7, leading to stabilize it. Ubiquitinated by COP1, which leads to proteasomal degradation (By similarity). Ubiquitination and subsequent proteasomal degradation is negatively regulated by CCAR2 (PubMed:25732823). Polyubiquitinated by C10orf90/FATS, polyubiquitination is 'Lys-48'-linkage independent and non-proteolytic, leading to TP53 stabilization (PubMed:24240685). Also ubiquitinated by the SCF(FBXO22)-KDMA4A complex; leading to proteasomal degradation (By similarity).</text>
</comment>
<comment type="PTM">
    <text evidence="2">Monomethylated at Lys-369 by SETD7, leading to stabilization and increased transcriptional activation. Monomethylated at Lys-367 by SMYD2, leading to decreased DNA-binding activity and subsequent transcriptional regulation activity. Lys-369 monomethylation prevents interaction with SMYD2 and subsequent monomethylation at Lys-367. Dimethylated at Lys-370 by EHMT1 and EHMT2. Monomethylated at Lys-379 by KMT5A, promoting interaction with L3MBTL1 and leading to repress transcriptional activity. Demethylation of dimethylated Lys-367 by KDM1A prevents interaction with TP53BP1 and represses TP53-mediated transcriptional activation (By similarity). Monomethylated at Arg-330 and dimethylated at Arg-332 and Arg-334 by PRMT5; methylation is increased after DNA damage and might possibly affect TP53 target gene specificity (By similarity). Polyubiquitinated by MUL1 at Lys-27 which leads to proteasomal degradation (By similarity). Deubiquitinated by USP3, leading to stabilization (By similarity). Ubiquitinated by MSL2, promoting its cytoplasmic localization (By similarity).</text>
</comment>
<comment type="PTM">
    <text evidence="1">Sumoylated with SUMO1. Sumoylated at Lys-383 by UBC9 (By similarity).</text>
</comment>
<comment type="PTM">
    <text evidence="2">Acetylation of Lys-379 by CREBBP enhances transcriptional activity. Acetylation of Lys-379 by EP300. Deacetylation of Lys-379 by SIRT1 impairs its ability to induce proapoptotic program and modulate cell senescence. Deacetylation by SIRT2 impairs its ability to induce transcription activation in a AKT-dependent manner. Acetylation at Lys-378 increases stability. Deacetylation at Lys-378 by SIRT6 decreases its stability, thereby regulating cell senescence. Acetylated at Lys-117 by KAT5, KAT6A and KAT8; regulating its ability to induce proapoptotic program.</text>
</comment>
<comment type="PTM">
    <text evidence="2">Lactylation by AARS1 prevents ability to undergo liquid-liquid phase separation (LLPS), thereby inhibiting transcription factor activity.</text>
</comment>
<comment type="disease">
    <text>p53 is found in increased amounts in a wide variety of transformed cells. p53 is frequently mutated or inactivated in many types of cancer.</text>
</comment>
<comment type="similarity">
    <text evidence="27">Belongs to the p53 family.</text>
</comment>
<comment type="caution">
    <text evidence="27">It is uncertain whether Met-1 or Met-4 is the initiator.</text>
</comment>
<sequence>MTAMEESQSDISLELPLSQETFSGLWKLLPPEDILPSPHCMDDLLLPQDVEEFFEGPSEALRVSGAPAAQDPVTETPGPVAPAPATPWPLSSFVPSQKTYQGNYGFHLGFLQSGTAKSVMCTYSPPLNKLFCQLAKTCPVQLWVSATPPAGSRVRAMAIYKKSQHMTEVVRRCPHHERCSDGDGLAPPQHLIRVEGNLYPEYLEDRQTFRHSVVVPYEPPEAGSEYTTIHYKYMCNSSCMGGMNRRPILTIITLEDSSGNLLGRDSFEVRVCACPGRDRRTEEENFRKKEVLCPELPPGSAKRALPTCTSASPPQKKKPLDGEYFTLKIRGRKRFEMFRELNEALELKDAHATEESGDSRAHSSYLKTKKGQSTSRHKKTMVKKVGPDSD</sequence>
<proteinExistence type="evidence at protein level"/>
<accession>P02340</accession>
<accession>Q9QUP3</accession>
<name>P53_MOUSE</name>
<gene>
    <name type="primary">Tp53</name>
    <name type="synonym">P53</name>
    <name type="synonym">Trp53</name>
</gene>
<reference key="1">
    <citation type="journal article" date="1984" name="EMBO J.">
        <title>Analysis of the gene coding for the murine cellular tumour antigen p53.</title>
        <authorList>
            <person name="Bienz B."/>
            <person name="Zakut-Houri R."/>
            <person name="Givol D."/>
            <person name="Oren M."/>
        </authorList>
    </citation>
    <scope>NUCLEOTIDE SEQUENCE [GENOMIC DNA]</scope>
</reference>
<reference key="2">
    <citation type="journal article" date="1983" name="Nature">
        <title>A single gene and a pseudogene for the cellular tumour antigen p53.</title>
        <authorList>
            <person name="Zakut-Houri R."/>
            <person name="Oren M."/>
            <person name="Bienz B."/>
            <person name="Lavie V."/>
            <person name="Hazum S."/>
            <person name="Givol D."/>
        </authorList>
    </citation>
    <scope>NUCLEOTIDE SEQUENCE [MRNA]</scope>
</reference>
<reference key="3">
    <citation type="journal article" date="1984" name="Nucleic Acids Res.">
        <title>Cloning and expression analysis of full length mouse cDNA sequences encoding the transformation associated protein p53.</title>
        <authorList>
            <person name="Jenkins J.R."/>
            <person name="Rudge K."/>
            <person name="Redmond S."/>
            <person name="Wade-Evans A."/>
        </authorList>
    </citation>
    <scope>NUCLEOTIDE SEQUENCE [MRNA]</scope>
</reference>
<reference key="4">
    <citation type="journal article" date="1986" name="Mol. Cell. Biol.">
        <title>Immunologically distinct p53 molecules generated by alternative splicing.</title>
        <authorList>
            <person name="Arai N."/>
            <person name="Nomura D."/>
            <person name="Yokota K."/>
            <person name="Wolf D."/>
            <person name="Brill E."/>
            <person name="Shohat O."/>
            <person name="Rotter V."/>
        </authorList>
    </citation>
    <scope>NUCLEOTIDE SEQUENCE [MRNA] (CLONES PCD53; P53-M11 AND P53-M8)</scope>
</reference>
<reference key="5">
    <citation type="journal article" date="1987" name="Bioorg. Khim.">
        <title>Primary structure of DNA complementary to mRNA of murine oncoprotein p53.</title>
        <authorList>
            <person name="Chumakov P.M."/>
        </authorList>
    </citation>
    <scope>NUCLEOTIDE SEQUENCE [MRNA]</scope>
    <scope>VARIANT VAL-135</scope>
</reference>
<reference key="6">
    <citation type="submission" date="1998-12" db="EMBL/GenBank/DDBJ databases">
        <title>Cell cycle in DNA-PKcs knock-out mice.</title>
        <authorList>
            <person name="Araki R."/>
            <person name="Fukumura R."/>
            <person name="Fujimori A."/>
            <person name="Tatsumi K."/>
            <person name="Abe M."/>
        </authorList>
    </citation>
    <scope>NUCLEOTIDE SEQUENCE [MRNA]</scope>
    <source>
        <strain>SCID</strain>
    </source>
</reference>
<reference key="7">
    <citation type="journal article" date="1999" name="Nature">
        <title>DNA-dependent protein kinase is not required for the p53-dependent response to DNA damage.</title>
        <authorList>
            <person name="Jimenez G.S."/>
            <person name="Bryntesson F."/>
            <person name="Torres-Arzayus M.I."/>
            <person name="Priestley A."/>
            <person name="Beeche M."/>
            <person name="Saito S."/>
            <person name="Sakaguchi K."/>
            <person name="Appella E."/>
            <person name="Jeggo P.A."/>
            <person name="Taccioli G.E."/>
            <person name="Wahl G.M."/>
            <person name="Hubank M."/>
        </authorList>
    </citation>
    <scope>NUCLEOTIDE SEQUENCE [MRNA]</scope>
</reference>
<reference key="8">
    <citation type="submission" date="1998-09" db="EMBL/GenBank/DDBJ databases">
        <title>Characterization of DNA-PKcs null mutant SX9.</title>
        <authorList>
            <person name="Araki R."/>
            <person name="Fukumura R."/>
            <person name="Fujimori A."/>
            <person name="Tatsumi K."/>
            <person name="Abe M."/>
        </authorList>
    </citation>
    <scope>NUCLEOTIDE SEQUENCE [MRNA]</scope>
    <source>
        <tissue>Mammary carcinoma</tissue>
    </source>
</reference>
<reference key="9">
    <citation type="submission" date="1998-11" db="EMBL/GenBank/DDBJ databases">
        <title>p53 in 129-SVJ mice.</title>
        <authorList>
            <person name="Fujimori A."/>
            <person name="Abe M."/>
        </authorList>
    </citation>
    <scope>NUCLEOTIDE SEQUENCE [MRNA]</scope>
    <source>
        <strain>129/SvJ</strain>
        <tissue>Lung fibroblast</tissue>
    </source>
</reference>
<reference key="10">
    <citation type="journal article" date="2004" name="Genome Res.">
        <title>The status, quality, and expansion of the NIH full-length cDNA project: the Mammalian Gene Collection (MGC).</title>
        <authorList>
            <consortium name="The MGC Project Team"/>
        </authorList>
    </citation>
    <scope>NUCLEOTIDE SEQUENCE [LARGE SCALE MRNA]</scope>
    <source>
        <strain>FVB/N</strain>
        <tissue>Mammary gland</tissue>
    </source>
</reference>
<reference key="11">
    <citation type="journal article" date="1991" name="Oncogene">
        <title>Loss of heterozygosity and mutational alterations of the p53 gene in skin tumours of interspecific hybrid mice.</title>
        <authorList>
            <person name="Burns P.A."/>
            <person name="Kemp C.J."/>
            <person name="Gannon J.V."/>
            <person name="Lane D.P."/>
            <person name="Bremner R."/>
            <person name="Balmain A."/>
        </authorList>
    </citation>
    <scope>NUCLEOTIDE SEQUENCE [GENOMIC DNA] OF 222-258</scope>
</reference>
<reference key="12">
    <citation type="journal article" date="1979" name="Proc. Natl. Acad. Sci. U.S.A.">
        <title>Detection of a transformation-related antigen in chemically induced sarcomas and other transformed cells of the mouse.</title>
        <authorList>
            <person name="DeLeo A.B."/>
            <person name="Jay G."/>
            <person name="Appella E."/>
            <person name="Dubois G.C."/>
            <person name="Law L.W."/>
            <person name="Old L.J."/>
        </authorList>
    </citation>
    <scope>DISCOVERY OF P53</scope>
</reference>
<reference key="13">
    <citation type="journal article" date="2000" name="Oncogene">
        <title>p53 is involved in the p120E4F-mediated growth arrest.</title>
        <authorList>
            <person name="Sandy P."/>
            <person name="Gostissa M."/>
            <person name="Fogal V."/>
            <person name="Cecco L.D."/>
            <person name="Szalay K."/>
            <person name="Rooney R.J."/>
            <person name="Schneider C."/>
            <person name="Del Sal G."/>
        </authorList>
    </citation>
    <scope>INTERACTION WITH E4F1</scope>
</reference>
<reference key="14">
    <citation type="journal article" date="2003" name="Proc. Natl. Acad. Sci. U.S.A.">
        <title>Characterization of cells and gene-targeted mice deficient for the p53-binding kinase homeodomain-interacting protein kinase 1 (HIPK1).</title>
        <authorList>
            <person name="Kondo S."/>
            <person name="Lu Y."/>
            <person name="Debbas M."/>
            <person name="Lin A.W."/>
            <person name="Sarosi I."/>
            <person name="Itie A."/>
            <person name="Wakeham A."/>
            <person name="Tuan J."/>
            <person name="Saris C."/>
            <person name="Elliott G."/>
            <person name="Ma W."/>
            <person name="Benchimol S."/>
            <person name="Lowe S.W."/>
            <person name="Mak T.W."/>
            <person name="Thukral S.K."/>
        </authorList>
    </citation>
    <scope>INTERACTION WITH HIPK1</scope>
    <scope>PHOSPHORYLATION</scope>
</reference>
<reference key="15">
    <citation type="journal article" date="2004" name="EMBO J.">
        <title>Axin stimulates p53 functions by activation of HIPK2 kinase through multimeric complex formation.</title>
        <authorList>
            <person name="Rui Y."/>
            <person name="Xu Z."/>
            <person name="Lin S."/>
            <person name="Li Q."/>
            <person name="Rui H."/>
            <person name="Luo W."/>
            <person name="Zhou H.-M."/>
            <person name="Cheung P.-Y."/>
            <person name="Wu Z."/>
            <person name="Ye Z."/>
            <person name="Li P."/>
            <person name="Han J."/>
            <person name="Lin S.-C."/>
        </authorList>
    </citation>
    <scope>INTERACTION WITH AXIN1</scope>
    <scope>IDENTIFICATION IN A COMPLEX WITH HIPK2 AND AXIN1</scope>
</reference>
<reference key="16">
    <citation type="journal article" date="1986" name="Proc. Natl. Acad. Sci. U.S.A.">
        <title>Mapping of phosphomonoester and apparent phosphodiester bonds of the oncogene product p53 from simian virus 40-transformed 3T3 cells.</title>
        <authorList>
            <person name="Samad A."/>
            <person name="Anderson C.W."/>
            <person name="Carroll R.B."/>
        </authorList>
    </citation>
    <scope>PHOSPHORYLATION AT SER-312 AND SER-389</scope>
    <scope>RNA-BINDING</scope>
</reference>
<reference key="17">
    <citation type="journal article" date="1990" name="EMBO J.">
        <title>The p53 tumour suppressor protein is phosphorylated at serine 389 by casein kinase II.</title>
        <authorList>
            <person name="Meek D.W."/>
            <person name="Simon S."/>
            <person name="Kikkawa U."/>
            <person name="Eckhart W."/>
        </authorList>
    </citation>
    <scope>PHOSPHORYLATION AT SER-389</scope>
</reference>
<reference key="18">
    <citation type="journal article" date="1992" name="Mol. Cell. Biol.">
        <title>p53 is covalently linked to 5.8S rRNA.</title>
        <authorList>
            <person name="Fontoura B.M."/>
            <person name="Sorokina E.A."/>
            <person name="David E."/>
            <person name="Carroll R.B."/>
        </authorList>
    </citation>
    <scope>PUTATIVE RNA-BINDING</scope>
</reference>
<reference key="19">
    <citation type="journal article" date="2001" name="Cell">
        <title>Negative control of p53 by Sir2alpha promotes cell survival under stress.</title>
        <authorList>
            <person name="Luo J."/>
            <person name="Nikolaev A.Y."/>
            <person name="Imai S."/>
            <person name="Chen D."/>
            <person name="Su F."/>
            <person name="Shiloh A."/>
            <person name="Guarente L."/>
            <person name="Gu W."/>
        </authorList>
    </citation>
    <scope>DEACETYLATION BY SIRT1</scope>
</reference>
<reference key="20">
    <citation type="journal article" date="2004" name="Int. J. Oncol.">
        <title>Identification and characterization of murine mHAUSP encoding a deubiquitinating enzyme that regulates the status of p53 ubiquitination.</title>
        <authorList>
            <person name="Lim S.-K."/>
            <person name="Shin J.-M."/>
            <person name="Kim Y.-S."/>
            <person name="Baek K.-H."/>
        </authorList>
    </citation>
    <scope>INTERACTION WITH USP7</scope>
</reference>
<reference key="21">
    <citation type="journal article" date="2002" name="J. Biol. Chem.">
        <title>Differential effect of ik3-1/cables on p53- and p73-induced cell death.</title>
        <authorList>
            <person name="Tsuji K."/>
            <person name="Mizumoto K."/>
            <person name="Yamochi T."/>
            <person name="Nishimoto I."/>
            <person name="Matsuoka M."/>
        </authorList>
    </citation>
    <scope>IDENTIFICATION IN A COMPLEX WITH CABLES1 AND TP73</scope>
</reference>
<reference key="22">
    <citation type="journal article" date="2003" name="Int. J. Cancer">
        <title>Direct interaction with and activation of p53 by SMAR1 retards cell-cycle progression at G2/M phase and delays tumor growth in mice.</title>
        <authorList>
            <person name="Kaul R."/>
            <person name="Mukherjee S."/>
            <person name="Ahmed F."/>
            <person name="Bhat M.K."/>
            <person name="Chhipa R."/>
            <person name="Galande S."/>
            <person name="Chattopadhyay S."/>
        </authorList>
    </citation>
    <scope>INTERACTION WITH BANP</scope>
</reference>
<reference key="23">
    <citation type="journal article" date="2004" name="Nat. Cell Biol.">
        <title>PML regulates p53 stability by sequestering Mdm2 to the nucleolus.</title>
        <authorList>
            <person name="Bernardi R."/>
            <person name="Scaglioni P.P."/>
            <person name="Bergmann S."/>
            <person name="Horn H.F."/>
            <person name="Vousden K.H."/>
            <person name="Pandolfi P.P."/>
        </authorList>
    </citation>
    <scope>PHOSPHORYLATION AT SER-18</scope>
    <scope>LYSINE ACETYLATION</scope>
    <scope>UBIQUITINATION</scope>
    <scope>SUBCELLULAR LOCATION</scope>
</reference>
<reference key="24">
    <citation type="journal article" date="2007" name="Cell">
        <title>PRAK is essential for ras-induced senescence and tumor suppression.</title>
        <authorList>
            <person name="Sun P."/>
            <person name="Yoshizuka N."/>
            <person name="New L."/>
            <person name="Moser B.A."/>
            <person name="Li Y."/>
            <person name="Liao R."/>
            <person name="Xie C."/>
            <person name="Chen J."/>
            <person name="Deng Q."/>
            <person name="Yamout M."/>
            <person name="Dong M.Q."/>
            <person name="Frangou C.G."/>
            <person name="Yates J.R. III"/>
            <person name="Wright P.E."/>
            <person name="Han J."/>
        </authorList>
    </citation>
    <scope>PHOSPHORYLATION AT SER-37</scope>
</reference>
<reference key="25">
    <citation type="journal article" date="2007" name="Cell">
        <title>Hzf Determines cell survival upon genotoxic stress by modulating p53 transactivation.</title>
        <authorList>
            <person name="Das S."/>
            <person name="Raj L."/>
            <person name="Zhao B."/>
            <person name="Kimura Y."/>
            <person name="Bernstein A."/>
            <person name="Aaronson S.A."/>
            <person name="Lee S.W."/>
        </authorList>
    </citation>
    <scope>INTERACTION WITH ZNF385A</scope>
</reference>
<reference key="26">
    <citation type="journal article" date="2007" name="FEBS Lett.">
        <title>Novel homeodomain-interacting protein kinase family member, HIPK4, phosphorylates human p53 at serine 9.</title>
        <authorList>
            <person name="Arai S."/>
            <person name="Matsushita A."/>
            <person name="Du K."/>
            <person name="Yagi K."/>
            <person name="Okazaki Y."/>
            <person name="Kurokawa R."/>
        </authorList>
    </citation>
    <scope>PHOSPHORYLATION AT SER-12</scope>
</reference>
<reference key="27">
    <citation type="journal article" date="2009" name="Nat. Cell Biol.">
        <title>CHD8 suppresses p53-mediated apoptosis through histone H1 recruitment during early embryogenesis.</title>
        <authorList>
            <person name="Nishiyama M."/>
            <person name="Oshikawa K."/>
            <person name="Tsukada Y.I."/>
            <person name="Nakagawa T."/>
            <person name="Iemura S."/>
            <person name="Natsume T."/>
            <person name="Fan Y."/>
            <person name="Kikuchi A."/>
            <person name="Skoultchi A.I."/>
            <person name="Nakayama K.I."/>
        </authorList>
    </citation>
    <scope>INTERACTION WITH CHD8</scope>
</reference>
<reference key="28">
    <citation type="journal article" date="2009" name="Proc. Natl. Acad. Sci. U.S.A.">
        <title>Trim24 targets endogenous p53 for degradation.</title>
        <authorList>
            <person name="Allton K."/>
            <person name="Jain A.K."/>
            <person name="Herz H.M."/>
            <person name="Tsai W.W."/>
            <person name="Jung S.Y."/>
            <person name="Qin J."/>
            <person name="Bergmann A."/>
            <person name="Johnson R.L."/>
            <person name="Barton M.C."/>
        </authorList>
    </citation>
    <scope>FUNCTION</scope>
    <scope>UBIQUITINATION</scope>
    <scope>INTERACTION WITH TRIM24</scope>
</reference>
<reference key="29">
    <citation type="journal article" date="2010" name="Cell">
        <title>A large intergenic noncoding RNA induced by p53 mediates global gene repression in the p53 response.</title>
        <authorList>
            <person name="Huarte M."/>
            <person name="Guttman M."/>
            <person name="Feldser D."/>
            <person name="Garber M."/>
            <person name="Koziol M.J."/>
            <person name="Kenzelmann-Broz D."/>
            <person name="Khalil A.M."/>
            <person name="Zuk O."/>
            <person name="Amit I."/>
            <person name="Rabani M."/>
            <person name="Attardi L.D."/>
            <person name="Regev A."/>
            <person name="Lander E.S."/>
            <person name="Jacks T."/>
            <person name="Rinn J.L."/>
        </authorList>
    </citation>
    <scope>FUNCTION</scope>
</reference>
<reference key="30">
    <citation type="journal article" date="2012" name="Cell">
        <title>p53 opens the mitochondrial permeability transition pore to trigger necrosis.</title>
        <authorList>
            <person name="Vaseva A.V."/>
            <person name="Marchenko N.D."/>
            <person name="Ji K."/>
            <person name="Tsirka S.E."/>
            <person name="Holzmann S."/>
            <person name="Moll U.M."/>
        </authorList>
    </citation>
    <scope>FUNCTION</scope>
</reference>
<reference key="31">
    <citation type="journal article" date="2013" name="Mol. Cell">
        <title>SIRT5-mediated lysine desuccinylation impacts diverse metabolic pathways.</title>
        <authorList>
            <person name="Park J."/>
            <person name="Chen Y."/>
            <person name="Tishkoff D.X."/>
            <person name="Peng C."/>
            <person name="Tan M."/>
            <person name="Dai L."/>
            <person name="Xie Z."/>
            <person name="Zhang Y."/>
            <person name="Zwaans B.M."/>
            <person name="Skinner M.E."/>
            <person name="Lombard D.B."/>
            <person name="Zhao Y."/>
        </authorList>
    </citation>
    <scope>ACETYLATION [LARGE SCALE ANALYSIS] AT LYS-318</scope>
    <scope>IDENTIFICATION BY MASS SPECTROMETRY [LARGE SCALE ANALYSIS]</scope>
    <source>
        <tissue>Embryonic fibroblast</tissue>
    </source>
</reference>
<reference key="32">
    <citation type="journal article" date="2013" name="Nat. Commun.">
        <title>p53 regulates Period2 expression and the circadian clock.</title>
        <authorList>
            <person name="Miki T."/>
            <person name="Matsumoto T."/>
            <person name="Zhao Z."/>
            <person name="Lee C.C."/>
        </authorList>
    </citation>
    <scope>FUNCTION</scope>
    <scope>INDUCTION</scope>
</reference>
<reference key="33">
    <citation type="journal article" date="2014" name="Oncogene">
        <title>FATS is an E2-independent ubiquitin ligase that stabilizes p53 and promotes its activation in response to DNA damage.</title>
        <authorList>
            <person name="Yan S."/>
            <person name="Qiu L."/>
            <person name="Ma K."/>
            <person name="Zhang X."/>
            <person name="Zhao Y."/>
            <person name="Zhang J."/>
            <person name="Li X."/>
            <person name="Hao X."/>
            <person name="Li Z."/>
        </authorList>
    </citation>
    <scope>INTERACTION WITH C10ORF90</scope>
    <scope>UBIQUITINATION BY C10ORF90</scope>
</reference>
<reference key="34">
    <citation type="journal article" date="2015" name="Cell Rep.">
        <title>DBC1 functions as a tumor suppressor by regulating p53 stability.</title>
        <authorList>
            <person name="Qin B."/>
            <person name="Minter-Dykhouse K."/>
            <person name="Yu J."/>
            <person name="Zhang J."/>
            <person name="Liu T."/>
            <person name="Zhang H."/>
            <person name="Lee S."/>
            <person name="Kim J."/>
            <person name="Wang L."/>
            <person name="Lou Z."/>
        </authorList>
    </citation>
    <scope>UBIQUITINATION</scope>
    <scope>PROTEASOMAL DEGRADATION</scope>
</reference>
<reference key="35">
    <citation type="journal article" date="2020" name="Nat. Cancer">
        <title>Aldolase B suppresses hepatocellular carcinogenesis by inhibiting G6PD and pentose phosphate pathways.</title>
        <authorList>
            <person name="Li M."/>
            <person name="He X."/>
            <person name="Guo W."/>
            <person name="Yu H."/>
            <person name="Zhang S."/>
            <person name="Wang N."/>
            <person name="Liu G."/>
            <person name="Sa R."/>
            <person name="Shen X."/>
            <person name="Jiang Y."/>
            <person name="Tang Y."/>
            <person name="Zhuo Y."/>
            <person name="Yin C."/>
            <person name="Tu Q."/>
            <person name="Li N."/>
            <person name="Nie X."/>
            <person name="Li Y."/>
            <person name="Hu Z."/>
            <person name="Zhu H."/>
            <person name="Ding J."/>
            <person name="Li Z."/>
            <person name="Liu T."/>
            <person name="Zhang F."/>
            <person name="Zhou H."/>
            <person name="Li S."/>
            <person name="Yue J."/>
            <person name="Yan Z."/>
            <person name="Cheng S."/>
            <person name="Tao Y."/>
            <person name="Yin H."/>
        </authorList>
    </citation>
    <scope>INTERACTION WITH ALDOB AND G6PD</scope>
</reference>
<reference key="36">
    <citation type="journal article" date="2001" name="J. Biol. Chem.">
        <title>Crystal structure of the mouse p53 core DNA-binding domain at 2.7 A resolution.</title>
        <authorList>
            <person name="Zhao K."/>
            <person name="Chai X."/>
            <person name="Johnston K."/>
            <person name="Clements A."/>
            <person name="Marmorstein R."/>
        </authorList>
    </citation>
    <scope>X-RAY CRYSTALLOGRAPHY (2.7 ANGSTROMS) OF 99-284</scope>
</reference>
<reference key="37">
    <citation type="journal article" date="2006" name="Acta Crystallogr. D">
        <title>High-resolution structure of the p53 core domain: implications for binding small-molecule stabilizing compounds.</title>
        <authorList>
            <person name="Ho W.C."/>
            <person name="Luo C."/>
            <person name="Zhao K."/>
            <person name="Chai X."/>
            <person name="Fitzgerald M.X."/>
            <person name="Marmorstein R."/>
        </authorList>
    </citation>
    <scope>X-RAY CRYSTALLOGRAPHY (1.55 ANGSTROMS) OF 95-292</scope>
</reference>
<reference key="38">
    <citation type="journal article" date="2006" name="J. Biol. Chem.">
        <title>Structure of the p53 core domain dimer bound to DNA.</title>
        <authorList>
            <person name="Ho W.C."/>
            <person name="Fitzgerald M.X."/>
            <person name="Marmorstein R."/>
        </authorList>
    </citation>
    <scope>X-RAY CRYSTALLOGRAPHY (2.3 ANGSTROMS) OF 95-292 IN COMPLEX WITH DNA AND ZINC IONS</scope>
    <scope>SUBUNIT</scope>
</reference>
<reference key="39">
    <citation type="journal article" date="2008" name="Proteins">
        <title>Crystal structure of the mouse p53 core domain in zinc-free state.</title>
        <authorList>
            <person name="Kwon E."/>
            <person name="Kim D.Y."/>
            <person name="Suh S.W."/>
            <person name="Kim K.K."/>
        </authorList>
    </citation>
    <scope>X-RAY CRYSTALLOGRAPHY (1.5 ANGSTROMS) OF 95-287</scope>
</reference>
<reference key="40">
    <citation type="journal article" date="2009" name="Oncogene">
        <title>Crystal structure of a p53 core tetramer bound to DNA.</title>
        <authorList>
            <person name="Malecka K.A."/>
            <person name="Ho W.C."/>
            <person name="Marmorstein R."/>
        </authorList>
    </citation>
    <scope>X-RAY CRYSTALLOGRAPHY (2.0 ANGSTROMS) OF 96-292 IN COMPLEX WITH DNA</scope>
    <scope>SUBUNIT</scope>
</reference>
<protein>
    <recommendedName>
        <fullName>Cellular tumor antigen p53</fullName>
    </recommendedName>
    <alternativeName>
        <fullName>Tumor suppressor p53</fullName>
    </alternativeName>
</protein>
<dbReference type="EMBL" id="X00876">
    <property type="protein sequence ID" value="CAA25420.1"/>
    <property type="molecule type" value="Genomic_DNA"/>
</dbReference>
<dbReference type="EMBL" id="X00877">
    <property type="protein sequence ID" value="CAA25420.1"/>
    <property type="status" value="JOINED"/>
    <property type="molecule type" value="Genomic_DNA"/>
</dbReference>
<dbReference type="EMBL" id="X00878">
    <property type="protein sequence ID" value="CAA25420.1"/>
    <property type="status" value="JOINED"/>
    <property type="molecule type" value="Genomic_DNA"/>
</dbReference>
<dbReference type="EMBL" id="X00879">
    <property type="protein sequence ID" value="CAA25420.1"/>
    <property type="status" value="JOINED"/>
    <property type="molecule type" value="Genomic_DNA"/>
</dbReference>
<dbReference type="EMBL" id="X00880">
    <property type="protein sequence ID" value="CAA25420.1"/>
    <property type="status" value="JOINED"/>
    <property type="molecule type" value="Genomic_DNA"/>
</dbReference>
<dbReference type="EMBL" id="X00881">
    <property type="protein sequence ID" value="CAA25420.1"/>
    <property type="status" value="JOINED"/>
    <property type="molecule type" value="Genomic_DNA"/>
</dbReference>
<dbReference type="EMBL" id="X00882">
    <property type="protein sequence ID" value="CAA25420.1"/>
    <property type="status" value="JOINED"/>
    <property type="molecule type" value="Genomic_DNA"/>
</dbReference>
<dbReference type="EMBL" id="X00883">
    <property type="protein sequence ID" value="CAA25420.1"/>
    <property type="status" value="JOINED"/>
    <property type="molecule type" value="Genomic_DNA"/>
</dbReference>
<dbReference type="EMBL" id="X00884">
    <property type="protein sequence ID" value="CAA25420.1"/>
    <property type="status" value="JOINED"/>
    <property type="molecule type" value="Genomic_DNA"/>
</dbReference>
<dbReference type="EMBL" id="X00885">
    <property type="protein sequence ID" value="CAA25420.1"/>
    <property type="status" value="JOINED"/>
    <property type="molecule type" value="Genomic_DNA"/>
</dbReference>
<dbReference type="EMBL" id="X01237">
    <property type="protein sequence ID" value="CAA25625.1"/>
    <property type="molecule type" value="mRNA"/>
</dbReference>
<dbReference type="EMBL" id="X00741">
    <property type="protein sequence ID" value="CAA25323.1"/>
    <property type="molecule type" value="mRNA"/>
</dbReference>
<dbReference type="EMBL" id="M13872">
    <property type="protein sequence ID" value="AAA39881.1"/>
    <property type="molecule type" value="mRNA"/>
</dbReference>
<dbReference type="EMBL" id="M13873">
    <property type="protein sequence ID" value="AAA39882.1"/>
    <property type="molecule type" value="mRNA"/>
</dbReference>
<dbReference type="EMBL" id="M13874">
    <property type="protein sequence ID" value="AAA39883.1"/>
    <property type="status" value="ALT_SEQ"/>
    <property type="molecule type" value="mRNA"/>
</dbReference>
<dbReference type="EMBL" id="AB021961">
    <property type="protein sequence ID" value="BAA82344.1"/>
    <property type="molecule type" value="mRNA"/>
</dbReference>
<dbReference type="EMBL" id="AF151353">
    <property type="protein sequence ID" value="AAD39535.1"/>
    <property type="molecule type" value="mRNA"/>
</dbReference>
<dbReference type="EMBL" id="AB017815">
    <property type="protein sequence ID" value="BAA82339.1"/>
    <property type="molecule type" value="mRNA"/>
</dbReference>
<dbReference type="EMBL" id="AB017816">
    <property type="protein sequence ID" value="BAA82340.1"/>
    <property type="molecule type" value="mRNA"/>
</dbReference>
<dbReference type="EMBL" id="AB020317">
    <property type="protein sequence ID" value="BAA82343.1"/>
    <property type="molecule type" value="mRNA"/>
</dbReference>
<dbReference type="EMBL" id="BC005448">
    <property type="protein sequence ID" value="AAH05448.1"/>
    <property type="molecule type" value="mRNA"/>
</dbReference>
<dbReference type="EMBL" id="S77930">
    <property type="protein sequence ID" value="AAB21108.2"/>
    <property type="molecule type" value="Genomic_DNA"/>
</dbReference>
<dbReference type="CCDS" id="CCDS36193.1"/>
<dbReference type="PIR" id="A22739">
    <property type="entry name" value="DNMS53"/>
</dbReference>
<dbReference type="PIR" id="S38824">
    <property type="entry name" value="S38824"/>
</dbReference>
<dbReference type="RefSeq" id="NP_001120705.1">
    <property type="nucleotide sequence ID" value="NM_001127233.1"/>
</dbReference>
<dbReference type="RefSeq" id="NP_035770.2">
    <property type="nucleotide sequence ID" value="NM_011640.3"/>
</dbReference>
<dbReference type="RefSeq" id="XP_006533220.1">
    <property type="nucleotide sequence ID" value="XM_006533157.3"/>
</dbReference>
<dbReference type="PDB" id="1HU8">
    <property type="method" value="X-ray"/>
    <property type="resolution" value="2.70 A"/>
    <property type="chains" value="A/B/C=99-284"/>
</dbReference>
<dbReference type="PDB" id="2GEQ">
    <property type="method" value="X-ray"/>
    <property type="resolution" value="2.30 A"/>
    <property type="chains" value="A/B=92-292"/>
</dbReference>
<dbReference type="PDB" id="2IOI">
    <property type="method" value="X-ray"/>
    <property type="resolution" value="1.55 A"/>
    <property type="chains" value="A=92-292"/>
</dbReference>
<dbReference type="PDB" id="2IOM">
    <property type="method" value="X-ray"/>
    <property type="resolution" value="2.00 A"/>
    <property type="chains" value="A=92-292"/>
</dbReference>
<dbReference type="PDB" id="2IOO">
    <property type="method" value="X-ray"/>
    <property type="resolution" value="2.02 A"/>
    <property type="chains" value="A=92-292"/>
</dbReference>
<dbReference type="PDB" id="2P52">
    <property type="method" value="X-ray"/>
    <property type="resolution" value="1.50 A"/>
    <property type="chains" value="A=92-287"/>
</dbReference>
<dbReference type="PDB" id="3EXJ">
    <property type="method" value="X-ray"/>
    <property type="resolution" value="2.00 A"/>
    <property type="chains" value="A/B=96-292"/>
</dbReference>
<dbReference type="PDB" id="3EXL">
    <property type="method" value="X-ray"/>
    <property type="resolution" value="2.20 A"/>
    <property type="chains" value="A=96-292"/>
</dbReference>
<dbReference type="PDBsum" id="1HU8"/>
<dbReference type="PDBsum" id="2GEQ"/>
<dbReference type="PDBsum" id="2IOI"/>
<dbReference type="PDBsum" id="2IOM"/>
<dbReference type="PDBsum" id="2IOO"/>
<dbReference type="PDBsum" id="2P52"/>
<dbReference type="PDBsum" id="3EXJ"/>
<dbReference type="PDBsum" id="3EXL"/>
<dbReference type="SMR" id="P02340"/>
<dbReference type="BioGRID" id="204323">
    <property type="interactions" value="143"/>
</dbReference>
<dbReference type="CORUM" id="P02340"/>
<dbReference type="DIP" id="DIP-369N"/>
<dbReference type="FunCoup" id="P02340">
    <property type="interactions" value="3274"/>
</dbReference>
<dbReference type="IntAct" id="P02340">
    <property type="interactions" value="50"/>
</dbReference>
<dbReference type="MINT" id="P02340"/>
<dbReference type="STRING" id="10090.ENSMUSP00000104298"/>
<dbReference type="ChEMBL" id="CHEMBL4164"/>
<dbReference type="GlyGen" id="P02340">
    <property type="glycosylation" value="2 sites, 1 O-linked glycan (1 site)"/>
</dbReference>
<dbReference type="iPTMnet" id="P02340"/>
<dbReference type="PhosphoSitePlus" id="P02340"/>
<dbReference type="SwissPalm" id="P02340"/>
<dbReference type="PaxDb" id="10090-ENSMUSP00000104298"/>
<dbReference type="ProteomicsDB" id="294305"/>
<dbReference type="ABCD" id="P02340">
    <property type="antibodies" value="20 sequenced antibodies"/>
</dbReference>
<dbReference type="Antibodypedia" id="3525">
    <property type="antibodies" value="9638 antibodies from 65 providers"/>
</dbReference>
<dbReference type="DNASU" id="22059"/>
<dbReference type="Ensembl" id="ENSMUST00000108658.10">
    <property type="protein sequence ID" value="ENSMUSP00000104298.4"/>
    <property type="gene ID" value="ENSMUSG00000059552.14"/>
</dbReference>
<dbReference type="GeneID" id="22059"/>
<dbReference type="KEGG" id="mmu:22059"/>
<dbReference type="UCSC" id="uc007jql.2">
    <property type="organism name" value="mouse"/>
</dbReference>
<dbReference type="AGR" id="MGI:98834"/>
<dbReference type="CTD" id="22059"/>
<dbReference type="MGI" id="MGI:98834">
    <property type="gene designation" value="Trp53"/>
</dbReference>
<dbReference type="VEuPathDB" id="HostDB:ENSMUSG00000059552"/>
<dbReference type="eggNOG" id="ENOG502QVY3">
    <property type="taxonomic scope" value="Eukaryota"/>
</dbReference>
<dbReference type="GeneTree" id="ENSGT00950000183153"/>
<dbReference type="HOGENOM" id="CLU_019621_0_0_1"/>
<dbReference type="InParanoid" id="P02340"/>
<dbReference type="OMA" id="HKKGEPC"/>
<dbReference type="OrthoDB" id="5915660at2759"/>
<dbReference type="Reactome" id="R-MMU-2559580">
    <property type="pathway name" value="Oxidative Stress Induced Senescence"/>
</dbReference>
<dbReference type="Reactome" id="R-MMU-2559584">
    <property type="pathway name" value="Formation of Senescence-Associated Heterochromatin Foci (SAHF)"/>
</dbReference>
<dbReference type="Reactome" id="R-MMU-2559585">
    <property type="pathway name" value="Oncogene Induced Senescence"/>
</dbReference>
<dbReference type="Reactome" id="R-MMU-2559586">
    <property type="pathway name" value="DNA Damage/Telomere Stress Induced Senescence"/>
</dbReference>
<dbReference type="Reactome" id="R-MMU-349425">
    <property type="pathway name" value="Autodegradation of the E3 ubiquitin ligase COP1"/>
</dbReference>
<dbReference type="Reactome" id="R-MMU-5689880">
    <property type="pathway name" value="Ub-specific processing proteases"/>
</dbReference>
<dbReference type="Reactome" id="R-MMU-5689896">
    <property type="pathway name" value="Ovarian tumor domain proteases"/>
</dbReference>
<dbReference type="Reactome" id="R-MMU-5693565">
    <property type="pathway name" value="Recruitment and ATM-mediated phosphorylation of repair and signaling proteins at DNA double strand breaks"/>
</dbReference>
<dbReference type="Reactome" id="R-MMU-6804754">
    <property type="pathway name" value="Regulation of TP53 Expression"/>
</dbReference>
<dbReference type="Reactome" id="R-MMU-6804756">
    <property type="pathway name" value="Regulation of TP53 Activity through Phosphorylation"/>
</dbReference>
<dbReference type="Reactome" id="R-MMU-6804757">
    <property type="pathway name" value="Regulation of TP53 Degradation"/>
</dbReference>
<dbReference type="Reactome" id="R-MMU-6804758">
    <property type="pathway name" value="Regulation of TP53 Activity through Acetylation"/>
</dbReference>
<dbReference type="Reactome" id="R-MMU-6804759">
    <property type="pathway name" value="Regulation of TP53 Activity through Association with Co-factors"/>
</dbReference>
<dbReference type="Reactome" id="R-MMU-6804760">
    <property type="pathway name" value="Regulation of TP53 Activity through Methylation"/>
</dbReference>
<dbReference type="Reactome" id="R-MMU-6811555">
    <property type="pathway name" value="PI5P Regulates TP53 Acetylation"/>
</dbReference>
<dbReference type="Reactome" id="R-MMU-69473">
    <property type="pathway name" value="G2/M DNA damage checkpoint"/>
</dbReference>
<dbReference type="Reactome" id="R-MMU-69481">
    <property type="pathway name" value="G2/M Checkpoints"/>
</dbReference>
<dbReference type="Reactome" id="R-MMU-69541">
    <property type="pathway name" value="Stabilization of p53"/>
</dbReference>
<dbReference type="Reactome" id="R-MMU-69895">
    <property type="pathway name" value="Transcriptional activation of cell cycle inhibitor p21"/>
</dbReference>
<dbReference type="Reactome" id="R-MMU-8852276">
    <property type="pathway name" value="The role of GTSE1 in G2/M progression after G2 checkpoint"/>
</dbReference>
<dbReference type="Reactome" id="R-MMU-8941855">
    <property type="pathway name" value="RUNX3 regulates CDKN1A transcription"/>
</dbReference>
<dbReference type="Reactome" id="R-MMU-9833482">
    <property type="pathway name" value="PKR-mediated signaling"/>
</dbReference>
<dbReference type="BioGRID-ORCS" id="22059">
    <property type="hits" value="15 hits in 120 CRISPR screens"/>
</dbReference>
<dbReference type="ChiTaRS" id="Trp53">
    <property type="organism name" value="mouse"/>
</dbReference>
<dbReference type="EvolutionaryTrace" id="P02340"/>
<dbReference type="PRO" id="PR:P02340"/>
<dbReference type="Proteomes" id="UP000000589">
    <property type="component" value="Chromosome 11"/>
</dbReference>
<dbReference type="RNAct" id="P02340">
    <property type="molecule type" value="protein"/>
</dbReference>
<dbReference type="Bgee" id="ENSMUSG00000059552">
    <property type="expression patterns" value="Expressed in embryonic post-anal tail and 235 other cell types or tissues"/>
</dbReference>
<dbReference type="ExpressionAtlas" id="P02340">
    <property type="expression patterns" value="baseline and differential"/>
</dbReference>
<dbReference type="GO" id="GO:0005813">
    <property type="term" value="C:centrosome"/>
    <property type="evidence" value="ECO:0000250"/>
    <property type="project" value="UniProtKB"/>
</dbReference>
<dbReference type="GO" id="GO:0000785">
    <property type="term" value="C:chromatin"/>
    <property type="evidence" value="ECO:0000250"/>
    <property type="project" value="ARUK-UCL"/>
</dbReference>
<dbReference type="GO" id="GO:0005737">
    <property type="term" value="C:cytoplasm"/>
    <property type="evidence" value="ECO:0000314"/>
    <property type="project" value="MGI"/>
</dbReference>
<dbReference type="GO" id="GO:0005829">
    <property type="term" value="C:cytosol"/>
    <property type="evidence" value="ECO:0000314"/>
    <property type="project" value="MGI"/>
</dbReference>
<dbReference type="GO" id="GO:0005783">
    <property type="term" value="C:endoplasmic reticulum"/>
    <property type="evidence" value="ECO:0007669"/>
    <property type="project" value="UniProtKB-SubCell"/>
</dbReference>
<dbReference type="GO" id="GO:0043073">
    <property type="term" value="C:germ cell nucleus"/>
    <property type="evidence" value="ECO:0000314"/>
    <property type="project" value="MGI"/>
</dbReference>
<dbReference type="GO" id="GO:0005759">
    <property type="term" value="C:mitochondrial matrix"/>
    <property type="evidence" value="ECO:0000314"/>
    <property type="project" value="MGI"/>
</dbReference>
<dbReference type="GO" id="GO:0005739">
    <property type="term" value="C:mitochondrion"/>
    <property type="evidence" value="ECO:0000314"/>
    <property type="project" value="UniProtKB"/>
</dbReference>
<dbReference type="GO" id="GO:0016363">
    <property type="term" value="C:nuclear matrix"/>
    <property type="evidence" value="ECO:0007669"/>
    <property type="project" value="Ensembl"/>
</dbReference>
<dbReference type="GO" id="GO:0005730">
    <property type="term" value="C:nucleolus"/>
    <property type="evidence" value="ECO:0000250"/>
    <property type="project" value="UniProtKB"/>
</dbReference>
<dbReference type="GO" id="GO:0005654">
    <property type="term" value="C:nucleoplasm"/>
    <property type="evidence" value="ECO:0000304"/>
    <property type="project" value="Reactome"/>
</dbReference>
<dbReference type="GO" id="GO:0005634">
    <property type="term" value="C:nucleus"/>
    <property type="evidence" value="ECO:0000314"/>
    <property type="project" value="ARUK-UCL"/>
</dbReference>
<dbReference type="GO" id="GO:0016605">
    <property type="term" value="C:PML body"/>
    <property type="evidence" value="ECO:0007669"/>
    <property type="project" value="UniProtKB-SubCell"/>
</dbReference>
<dbReference type="GO" id="GO:0005657">
    <property type="term" value="C:replication fork"/>
    <property type="evidence" value="ECO:0000314"/>
    <property type="project" value="MGI"/>
</dbReference>
<dbReference type="GO" id="GO:0035861">
    <property type="term" value="C:site of double-strand break"/>
    <property type="evidence" value="ECO:0000314"/>
    <property type="project" value="MGI"/>
</dbReference>
<dbReference type="GO" id="GO:0017053">
    <property type="term" value="C:transcription repressor complex"/>
    <property type="evidence" value="ECO:0007669"/>
    <property type="project" value="Ensembl"/>
</dbReference>
<dbReference type="GO" id="GO:0036310">
    <property type="term" value="F:ATP-dependent DNA/DNA annealing activity"/>
    <property type="evidence" value="ECO:0000250"/>
    <property type="project" value="UniProtKB"/>
</dbReference>
<dbReference type="GO" id="GO:0003682">
    <property type="term" value="F:chromatin binding"/>
    <property type="evidence" value="ECO:0000314"/>
    <property type="project" value="MGI"/>
</dbReference>
<dbReference type="GO" id="GO:0005507">
    <property type="term" value="F:copper ion binding"/>
    <property type="evidence" value="ECO:0000250"/>
    <property type="project" value="UniProtKB"/>
</dbReference>
<dbReference type="GO" id="GO:0001046">
    <property type="term" value="F:core promoter sequence-specific DNA binding"/>
    <property type="evidence" value="ECO:0007669"/>
    <property type="project" value="Ensembl"/>
</dbReference>
<dbReference type="GO" id="GO:0097718">
    <property type="term" value="F:disordered domain specific binding"/>
    <property type="evidence" value="ECO:0007669"/>
    <property type="project" value="Ensembl"/>
</dbReference>
<dbReference type="GO" id="GO:0003677">
    <property type="term" value="F:DNA binding"/>
    <property type="evidence" value="ECO:0000250"/>
    <property type="project" value="UniProtKB"/>
</dbReference>
<dbReference type="GO" id="GO:0001228">
    <property type="term" value="F:DNA-binding transcription activator activity, RNA polymerase II-specific"/>
    <property type="evidence" value="ECO:0000314"/>
    <property type="project" value="MGI"/>
</dbReference>
<dbReference type="GO" id="GO:0003700">
    <property type="term" value="F:DNA-binding transcription factor activity"/>
    <property type="evidence" value="ECO:0000314"/>
    <property type="project" value="MGI"/>
</dbReference>
<dbReference type="GO" id="GO:0001227">
    <property type="term" value="F:DNA-binding transcription repressor activity, RNA polymerase II-specific"/>
    <property type="evidence" value="ECO:0007669"/>
    <property type="project" value="Ensembl"/>
</dbReference>
<dbReference type="GO" id="GO:0042826">
    <property type="term" value="F:histone deacetylase binding"/>
    <property type="evidence" value="ECO:0007669"/>
    <property type="project" value="Ensembl"/>
</dbReference>
<dbReference type="GO" id="GO:0035033">
    <property type="term" value="F:histone deacetylase regulator activity"/>
    <property type="evidence" value="ECO:0000314"/>
    <property type="project" value="MGI"/>
</dbReference>
<dbReference type="GO" id="GO:0042802">
    <property type="term" value="F:identical protein binding"/>
    <property type="evidence" value="ECO:0007669"/>
    <property type="project" value="Ensembl"/>
</dbReference>
<dbReference type="GO" id="GO:0097371">
    <property type="term" value="F:MDM2/MDM4 family protein binding"/>
    <property type="evidence" value="ECO:0000353"/>
    <property type="project" value="BHF-UCL"/>
</dbReference>
<dbReference type="GO" id="GO:0140693">
    <property type="term" value="F:molecular condensate scaffold activity"/>
    <property type="evidence" value="ECO:0000250"/>
    <property type="project" value="UniProtKB"/>
</dbReference>
<dbReference type="GO" id="GO:0140677">
    <property type="term" value="F:molecular function activator activity"/>
    <property type="evidence" value="ECO:0007669"/>
    <property type="project" value="Ensembl"/>
</dbReference>
<dbReference type="GO" id="GO:0003730">
    <property type="term" value="F:mRNA 3'-UTR binding"/>
    <property type="evidence" value="ECO:0007669"/>
    <property type="project" value="Ensembl"/>
</dbReference>
<dbReference type="GO" id="GO:0002039">
    <property type="term" value="F:p53 binding"/>
    <property type="evidence" value="ECO:0007669"/>
    <property type="project" value="Ensembl"/>
</dbReference>
<dbReference type="GO" id="GO:1990841">
    <property type="term" value="F:promoter-specific chromatin binding"/>
    <property type="evidence" value="ECO:0000250"/>
    <property type="project" value="UniProtKB"/>
</dbReference>
<dbReference type="GO" id="GO:0002020">
    <property type="term" value="F:protease binding"/>
    <property type="evidence" value="ECO:0007669"/>
    <property type="project" value="Ensembl"/>
</dbReference>
<dbReference type="GO" id="GO:0046982">
    <property type="term" value="F:protein heterodimerization activity"/>
    <property type="evidence" value="ECO:0007669"/>
    <property type="project" value="Ensembl"/>
</dbReference>
<dbReference type="GO" id="GO:0051721">
    <property type="term" value="F:protein phosphatase 2A binding"/>
    <property type="evidence" value="ECO:0007669"/>
    <property type="project" value="Ensembl"/>
</dbReference>
<dbReference type="GO" id="GO:0051087">
    <property type="term" value="F:protein-folding chaperone binding"/>
    <property type="evidence" value="ECO:0007669"/>
    <property type="project" value="Ensembl"/>
</dbReference>
<dbReference type="GO" id="GO:0030971">
    <property type="term" value="F:receptor tyrosine kinase binding"/>
    <property type="evidence" value="ECO:0007669"/>
    <property type="project" value="Ensembl"/>
</dbReference>
<dbReference type="GO" id="GO:0000978">
    <property type="term" value="F:RNA polymerase II cis-regulatory region sequence-specific DNA binding"/>
    <property type="evidence" value="ECO:0000314"/>
    <property type="project" value="UniProtKB"/>
</dbReference>
<dbReference type="GO" id="GO:0000977">
    <property type="term" value="F:RNA polymerase II transcription regulatory region sequence-specific DNA binding"/>
    <property type="evidence" value="ECO:0000314"/>
    <property type="project" value="MGI"/>
</dbReference>
<dbReference type="GO" id="GO:0061629">
    <property type="term" value="F:RNA polymerase II-specific DNA-binding transcription factor binding"/>
    <property type="evidence" value="ECO:0007669"/>
    <property type="project" value="Ensembl"/>
</dbReference>
<dbReference type="GO" id="GO:0001094">
    <property type="term" value="F:TFIID-class transcription factor complex binding"/>
    <property type="evidence" value="ECO:0007669"/>
    <property type="project" value="Ensembl"/>
</dbReference>
<dbReference type="GO" id="GO:0001223">
    <property type="term" value="F:transcription coactivator binding"/>
    <property type="evidence" value="ECO:0007669"/>
    <property type="project" value="Ensembl"/>
</dbReference>
<dbReference type="GO" id="GO:0031625">
    <property type="term" value="F:ubiquitin protein ligase binding"/>
    <property type="evidence" value="ECO:0000353"/>
    <property type="project" value="UniProtKB"/>
</dbReference>
<dbReference type="GO" id="GO:0006915">
    <property type="term" value="P:apoptotic process"/>
    <property type="evidence" value="ECO:0000314"/>
    <property type="project" value="MGI"/>
</dbReference>
<dbReference type="GO" id="GO:0002326">
    <property type="term" value="P:B cell lineage commitment"/>
    <property type="evidence" value="ECO:0000315"/>
    <property type="project" value="MGI"/>
</dbReference>
<dbReference type="GO" id="GO:0048539">
    <property type="term" value="P:bone marrow development"/>
    <property type="evidence" value="ECO:0007669"/>
    <property type="project" value="Ensembl"/>
</dbReference>
<dbReference type="GO" id="GO:0010659">
    <property type="term" value="P:cardiac muscle cell apoptotic process"/>
    <property type="evidence" value="ECO:0000315"/>
    <property type="project" value="MGI"/>
</dbReference>
<dbReference type="GO" id="GO:0060411">
    <property type="term" value="P:cardiac septum morphogenesis"/>
    <property type="evidence" value="ECO:0000316"/>
    <property type="project" value="MGI"/>
</dbReference>
<dbReference type="GO" id="GO:0008283">
    <property type="term" value="P:cell population proliferation"/>
    <property type="evidence" value="ECO:0000316"/>
    <property type="project" value="MGI"/>
</dbReference>
<dbReference type="GO" id="GO:0072717">
    <property type="term" value="P:cellular response to actinomycin D"/>
    <property type="evidence" value="ECO:0007669"/>
    <property type="project" value="Ensembl"/>
</dbReference>
<dbReference type="GO" id="GO:0071480">
    <property type="term" value="P:cellular response to gamma radiation"/>
    <property type="evidence" value="ECO:0000314"/>
    <property type="project" value="MGI"/>
</dbReference>
<dbReference type="GO" id="GO:0042149">
    <property type="term" value="P:cellular response to glucose starvation"/>
    <property type="evidence" value="ECO:0000266"/>
    <property type="project" value="MGI"/>
</dbReference>
<dbReference type="GO" id="GO:0071479">
    <property type="term" value="P:cellular response to ionizing radiation"/>
    <property type="evidence" value="ECO:0000314"/>
    <property type="project" value="CAFA"/>
</dbReference>
<dbReference type="GO" id="GO:0033554">
    <property type="term" value="P:cellular response to stress"/>
    <property type="evidence" value="ECO:0000316"/>
    <property type="project" value="MGI"/>
</dbReference>
<dbReference type="GO" id="GO:0034644">
    <property type="term" value="P:cellular response to UV"/>
    <property type="evidence" value="ECO:0000314"/>
    <property type="project" value="CAFA"/>
</dbReference>
<dbReference type="GO" id="GO:0071494">
    <property type="term" value="P:cellular response to UV-C"/>
    <property type="evidence" value="ECO:0000316"/>
    <property type="project" value="MGI"/>
</dbReference>
<dbReference type="GO" id="GO:0071466">
    <property type="term" value="P:cellular response to xenobiotic stimulus"/>
    <property type="evidence" value="ECO:0007669"/>
    <property type="project" value="Ensembl"/>
</dbReference>
<dbReference type="GO" id="GO:0090398">
    <property type="term" value="P:cellular senescence"/>
    <property type="evidence" value="ECO:0000250"/>
    <property type="project" value="UniProtKB"/>
</dbReference>
<dbReference type="GO" id="GO:0007417">
    <property type="term" value="P:central nervous system development"/>
    <property type="evidence" value="ECO:0000316"/>
    <property type="project" value="MGI"/>
</dbReference>
<dbReference type="GO" id="GO:0021549">
    <property type="term" value="P:cerebellum development"/>
    <property type="evidence" value="ECO:0000314"/>
    <property type="project" value="MGI"/>
</dbReference>
<dbReference type="GO" id="GO:0051276">
    <property type="term" value="P:chromosome organization"/>
    <property type="evidence" value="ECO:0000316"/>
    <property type="project" value="MGI"/>
</dbReference>
<dbReference type="GO" id="GO:0048512">
    <property type="term" value="P:circadian behavior"/>
    <property type="evidence" value="ECO:0000315"/>
    <property type="project" value="UniProtKB"/>
</dbReference>
<dbReference type="GO" id="GO:0007623">
    <property type="term" value="P:circadian rhythm"/>
    <property type="evidence" value="ECO:0000270"/>
    <property type="project" value="UniProtKB"/>
</dbReference>
<dbReference type="GO" id="GO:0008340">
    <property type="term" value="P:determination of adult lifespan"/>
    <property type="evidence" value="ECO:0000315"/>
    <property type="project" value="BHF-UCL"/>
</dbReference>
<dbReference type="GO" id="GO:0006974">
    <property type="term" value="P:DNA damage response"/>
    <property type="evidence" value="ECO:0000314"/>
    <property type="project" value="MGI"/>
</dbReference>
<dbReference type="GO" id="GO:0030330">
    <property type="term" value="P:DNA damage response, signal transduction by p53 class mediator"/>
    <property type="evidence" value="ECO:0000314"/>
    <property type="project" value="MGI"/>
</dbReference>
<dbReference type="GO" id="GO:0006302">
    <property type="term" value="P:double-strand break repair"/>
    <property type="evidence" value="ECO:0000315"/>
    <property type="project" value="MGI"/>
</dbReference>
<dbReference type="GO" id="GO:0009792">
    <property type="term" value="P:embryo development ending in birth or egg hatching"/>
    <property type="evidence" value="ECO:0000316"/>
    <property type="project" value="MGI"/>
</dbReference>
<dbReference type="GO" id="GO:0048568">
    <property type="term" value="P:embryonic organ development"/>
    <property type="evidence" value="ECO:0000316"/>
    <property type="project" value="MGI"/>
</dbReference>
<dbReference type="GO" id="GO:0043153">
    <property type="term" value="P:entrainment of circadian clock by photoperiod"/>
    <property type="evidence" value="ECO:0000315"/>
    <property type="project" value="UniProtKB"/>
</dbReference>
<dbReference type="GO" id="GO:0006983">
    <property type="term" value="P:ER overload response"/>
    <property type="evidence" value="ECO:0000266"/>
    <property type="project" value="MGI"/>
</dbReference>
<dbReference type="GO" id="GO:0048144">
    <property type="term" value="P:fibroblast proliferation"/>
    <property type="evidence" value="ECO:0000315"/>
    <property type="project" value="MGI"/>
</dbReference>
<dbReference type="GO" id="GO:0007369">
    <property type="term" value="P:gastrulation"/>
    <property type="evidence" value="ECO:0000316"/>
    <property type="project" value="MGI"/>
</dbReference>
<dbReference type="GO" id="GO:0014009">
    <property type="term" value="P:glial cell proliferation"/>
    <property type="evidence" value="ECO:0000316"/>
    <property type="project" value="MGI"/>
</dbReference>
<dbReference type="GO" id="GO:0019661">
    <property type="term" value="P:glucose catabolic process to lactate via pyruvate"/>
    <property type="evidence" value="ECO:0000315"/>
    <property type="project" value="MGI"/>
</dbReference>
<dbReference type="GO" id="GO:0007507">
    <property type="term" value="P:heart development"/>
    <property type="evidence" value="ECO:0000316"/>
    <property type="project" value="MGI"/>
</dbReference>
<dbReference type="GO" id="GO:0060218">
    <property type="term" value="P:hematopoietic stem cell differentiation"/>
    <property type="evidence" value="ECO:0007669"/>
    <property type="project" value="Ensembl"/>
</dbReference>
<dbReference type="GO" id="GO:0001701">
    <property type="term" value="P:in utero embryonic development"/>
    <property type="evidence" value="ECO:0000316"/>
    <property type="project" value="MGI"/>
</dbReference>
<dbReference type="GO" id="GO:0072332">
    <property type="term" value="P:intrinsic apoptotic signaling pathway by p53 class mediator"/>
    <property type="evidence" value="ECO:0000314"/>
    <property type="project" value="MGI"/>
</dbReference>
<dbReference type="GO" id="GO:0042771">
    <property type="term" value="P:intrinsic apoptotic signaling pathway in response to DNA damage by p53 class mediator"/>
    <property type="evidence" value="ECO:0000314"/>
    <property type="project" value="CAFA"/>
</dbReference>
<dbReference type="GO" id="GO:0070059">
    <property type="term" value="P:intrinsic apoptotic signaling pathway in response to endoplasmic reticulum stress"/>
    <property type="evidence" value="ECO:0000315"/>
    <property type="project" value="ParkinsonsUK-UCL"/>
</dbReference>
<dbReference type="GO" id="GO:1990144">
    <property type="term" value="P:intrinsic apoptotic signaling pathway in response to hypoxia"/>
    <property type="evidence" value="ECO:0000315"/>
    <property type="project" value="MGI"/>
</dbReference>
<dbReference type="GO" id="GO:0043504">
    <property type="term" value="P:mitochondrial DNA repair"/>
    <property type="evidence" value="ECO:0000315"/>
    <property type="project" value="MGI"/>
</dbReference>
<dbReference type="GO" id="GO:0000423">
    <property type="term" value="P:mitophagy"/>
    <property type="evidence" value="ECO:0000315"/>
    <property type="project" value="MGI"/>
</dbReference>
<dbReference type="GO" id="GO:0031571">
    <property type="term" value="P:mitotic G1 DNA damage checkpoint signaling"/>
    <property type="evidence" value="ECO:0000315"/>
    <property type="project" value="MGI"/>
</dbReference>
<dbReference type="GO" id="GO:0009299">
    <property type="term" value="P:mRNA transcription"/>
    <property type="evidence" value="ECO:0007669"/>
    <property type="project" value="Ensembl"/>
</dbReference>
<dbReference type="GO" id="GO:0035264">
    <property type="term" value="P:multicellular organism growth"/>
    <property type="evidence" value="ECO:0000316"/>
    <property type="project" value="MGI"/>
</dbReference>
<dbReference type="GO" id="GO:0070266">
    <property type="term" value="P:necroptotic process"/>
    <property type="evidence" value="ECO:0000316"/>
    <property type="project" value="MGI"/>
</dbReference>
<dbReference type="GO" id="GO:0043066">
    <property type="term" value="P:negative regulation of apoptotic process"/>
    <property type="evidence" value="ECO:0000315"/>
    <property type="project" value="MGI"/>
</dbReference>
<dbReference type="GO" id="GO:0030308">
    <property type="term" value="P:negative regulation of cell growth"/>
    <property type="evidence" value="ECO:0000250"/>
    <property type="project" value="UniProtKB"/>
</dbReference>
<dbReference type="GO" id="GO:0008285">
    <property type="term" value="P:negative regulation of cell population proliferation"/>
    <property type="evidence" value="ECO:0000315"/>
    <property type="project" value="BHF-UCL"/>
</dbReference>
<dbReference type="GO" id="GO:0008156">
    <property type="term" value="P:negative regulation of DNA replication"/>
    <property type="evidence" value="ECO:0000314"/>
    <property type="project" value="MGI"/>
</dbReference>
<dbReference type="GO" id="GO:0045892">
    <property type="term" value="P:negative regulation of DNA-templated transcription"/>
    <property type="evidence" value="ECO:0000314"/>
    <property type="project" value="UniProtKB"/>
</dbReference>
<dbReference type="GO" id="GO:0048147">
    <property type="term" value="P:negative regulation of fibroblast proliferation"/>
    <property type="evidence" value="ECO:0000315"/>
    <property type="project" value="MGI"/>
</dbReference>
<dbReference type="GO" id="GO:1903451">
    <property type="term" value="P:negative regulation of G1 to G0 transition"/>
    <property type="evidence" value="ECO:0007669"/>
    <property type="project" value="Ensembl"/>
</dbReference>
<dbReference type="GO" id="GO:0010629">
    <property type="term" value="P:negative regulation of gene expression"/>
    <property type="evidence" value="ECO:0000316"/>
    <property type="project" value="MGI"/>
</dbReference>
<dbReference type="GO" id="GO:0060253">
    <property type="term" value="P:negative regulation of glial cell proliferation"/>
    <property type="evidence" value="ECO:0000316"/>
    <property type="project" value="MGI"/>
</dbReference>
<dbReference type="GO" id="GO:1904024">
    <property type="term" value="P:negative regulation of glucose catabolic process to lactate via pyruvate"/>
    <property type="evidence" value="ECO:0000315"/>
    <property type="project" value="MGI"/>
</dbReference>
<dbReference type="GO" id="GO:1903799">
    <property type="term" value="P:negative regulation of miRNA processing"/>
    <property type="evidence" value="ECO:0000316"/>
    <property type="project" value="MGI"/>
</dbReference>
<dbReference type="GO" id="GO:1901525">
    <property type="term" value="P:negative regulation of mitophagy"/>
    <property type="evidence" value="ECO:0000315"/>
    <property type="project" value="MGI"/>
</dbReference>
<dbReference type="GO" id="GO:0045930">
    <property type="term" value="P:negative regulation of mitotic cell cycle"/>
    <property type="evidence" value="ECO:0000316"/>
    <property type="project" value="MGI"/>
</dbReference>
<dbReference type="GO" id="GO:0007406">
    <property type="term" value="P:negative regulation of neuroblast proliferation"/>
    <property type="evidence" value="ECO:0000316"/>
    <property type="project" value="MGI"/>
</dbReference>
<dbReference type="GO" id="GO:1905856">
    <property type="term" value="P:negative regulation of pentose-phosphate shunt"/>
    <property type="evidence" value="ECO:0007669"/>
    <property type="project" value="Ensembl"/>
</dbReference>
<dbReference type="GO" id="GO:0045861">
    <property type="term" value="P:negative regulation of proteolysis"/>
    <property type="evidence" value="ECO:0000315"/>
    <property type="project" value="MGI"/>
</dbReference>
<dbReference type="GO" id="GO:2000378">
    <property type="term" value="P:negative regulation of reactive oxygen species metabolic process"/>
    <property type="evidence" value="ECO:0000315"/>
    <property type="project" value="MGI"/>
</dbReference>
<dbReference type="GO" id="GO:2000647">
    <property type="term" value="P:negative regulation of stem cell proliferation"/>
    <property type="evidence" value="ECO:0000316"/>
    <property type="project" value="MGI"/>
</dbReference>
<dbReference type="GO" id="GO:0032211">
    <property type="term" value="P:negative regulation of telomere maintenance via telomerase"/>
    <property type="evidence" value="ECO:0007669"/>
    <property type="project" value="Ensembl"/>
</dbReference>
<dbReference type="GO" id="GO:0000122">
    <property type="term" value="P:negative regulation of transcription by RNA polymerase II"/>
    <property type="evidence" value="ECO:0000314"/>
    <property type="project" value="MGI"/>
</dbReference>
<dbReference type="GO" id="GO:0030512">
    <property type="term" value="P:negative regulation of transforming growth factor beta receptor signaling pathway"/>
    <property type="evidence" value="ECO:0000315"/>
    <property type="project" value="MGI"/>
</dbReference>
<dbReference type="GO" id="GO:0007405">
    <property type="term" value="P:neuroblast proliferation"/>
    <property type="evidence" value="ECO:0000316"/>
    <property type="project" value="MGI"/>
</dbReference>
<dbReference type="GO" id="GO:0051402">
    <property type="term" value="P:neuron apoptotic process"/>
    <property type="evidence" value="ECO:0000315"/>
    <property type="project" value="MGI"/>
</dbReference>
<dbReference type="GO" id="GO:0006289">
    <property type="term" value="P:nucleotide-excision repair"/>
    <property type="evidence" value="ECO:0000250"/>
    <property type="project" value="UniProtKB"/>
</dbReference>
<dbReference type="GO" id="GO:0097252">
    <property type="term" value="P:oligodendrocyte apoptotic process"/>
    <property type="evidence" value="ECO:0000250"/>
    <property type="project" value="UniProtKB"/>
</dbReference>
<dbReference type="GO" id="GO:0090403">
    <property type="term" value="P:oxidative stress-induced premature senescence"/>
    <property type="evidence" value="ECO:0007669"/>
    <property type="project" value="Ensembl"/>
</dbReference>
<dbReference type="GO" id="GO:0043065">
    <property type="term" value="P:positive regulation of apoptotic process"/>
    <property type="evidence" value="ECO:0000315"/>
    <property type="project" value="MGI"/>
</dbReference>
<dbReference type="GO" id="GO:0010666">
    <property type="term" value="P:positive regulation of cardiac muscle cell apoptotic process"/>
    <property type="evidence" value="ECO:0000315"/>
    <property type="project" value="MGI"/>
</dbReference>
<dbReference type="GO" id="GO:2000774">
    <property type="term" value="P:positive regulation of cellular senescence"/>
    <property type="evidence" value="ECO:0000315"/>
    <property type="project" value="BHF-UCL"/>
</dbReference>
<dbReference type="GO" id="GO:0045893">
    <property type="term" value="P:positive regulation of DNA-templated transcription"/>
    <property type="evidence" value="ECO:0000314"/>
    <property type="project" value="MGI"/>
</dbReference>
<dbReference type="GO" id="GO:1900119">
    <property type="term" value="P:positive regulation of execution phase of apoptosis"/>
    <property type="evidence" value="ECO:0007669"/>
    <property type="project" value="Ensembl"/>
</dbReference>
<dbReference type="GO" id="GO:2001244">
    <property type="term" value="P:positive regulation of intrinsic apoptotic signaling pathway"/>
    <property type="evidence" value="ECO:0000250"/>
    <property type="project" value="UniProtKB"/>
</dbReference>
<dbReference type="GO" id="GO:1902895">
    <property type="term" value="P:positive regulation of miRNA transcription"/>
    <property type="evidence" value="ECO:0007669"/>
    <property type="project" value="Ensembl"/>
</dbReference>
<dbReference type="GO" id="GO:0035794">
    <property type="term" value="P:positive regulation of mitochondrial membrane permeability"/>
    <property type="evidence" value="ECO:0000316"/>
    <property type="project" value="MGI"/>
</dbReference>
<dbReference type="GO" id="GO:0043525">
    <property type="term" value="P:positive regulation of neuron apoptotic process"/>
    <property type="evidence" value="ECO:0000314"/>
    <property type="project" value="MGI"/>
</dbReference>
<dbReference type="GO" id="GO:0062100">
    <property type="term" value="P:positive regulation of programmed necrotic cell death"/>
    <property type="evidence" value="ECO:0000315"/>
    <property type="project" value="ARUK-UCL"/>
</dbReference>
<dbReference type="GO" id="GO:2000379">
    <property type="term" value="P:positive regulation of reactive oxygen species metabolic process"/>
    <property type="evidence" value="ECO:0007669"/>
    <property type="project" value="Ensembl"/>
</dbReference>
<dbReference type="GO" id="GO:0090200">
    <property type="term" value="P:positive regulation of release of cytochrome c from mitochondria"/>
    <property type="evidence" value="ECO:0007669"/>
    <property type="project" value="Ensembl"/>
</dbReference>
<dbReference type="GO" id="GO:0045899">
    <property type="term" value="P:positive regulation of RNA polymerase II transcription preinitiation complex assembly"/>
    <property type="evidence" value="ECO:0007669"/>
    <property type="project" value="Ensembl"/>
</dbReference>
<dbReference type="GO" id="GO:0070245">
    <property type="term" value="P:positive regulation of thymocyte apoptotic process"/>
    <property type="evidence" value="ECO:0000315"/>
    <property type="project" value="BHF-UCL"/>
</dbReference>
<dbReference type="GO" id="GO:0045944">
    <property type="term" value="P:positive regulation of transcription by RNA polymerase II"/>
    <property type="evidence" value="ECO:0000314"/>
    <property type="project" value="MGI"/>
</dbReference>
<dbReference type="GO" id="GO:0006606">
    <property type="term" value="P:protein import into nucleus"/>
    <property type="evidence" value="ECO:0000314"/>
    <property type="project" value="MGI"/>
</dbReference>
<dbReference type="GO" id="GO:0050821">
    <property type="term" value="P:protein stabilization"/>
    <property type="evidence" value="ECO:0000316"/>
    <property type="project" value="MGI"/>
</dbReference>
<dbReference type="GO" id="GO:0051262">
    <property type="term" value="P:protein tetramerization"/>
    <property type="evidence" value="ECO:0007669"/>
    <property type="project" value="InterPro"/>
</dbReference>
<dbReference type="GO" id="GO:0007265">
    <property type="term" value="P:Ras protein signal transduction"/>
    <property type="evidence" value="ECO:0007669"/>
    <property type="project" value="Ensembl"/>
</dbReference>
<dbReference type="GO" id="GO:0072593">
    <property type="term" value="P:reactive oxygen species metabolic process"/>
    <property type="evidence" value="ECO:0000315"/>
    <property type="project" value="MGI"/>
</dbReference>
<dbReference type="GO" id="GO:0042981">
    <property type="term" value="P:regulation of apoptotic process"/>
    <property type="evidence" value="ECO:0000266"/>
    <property type="project" value="MGI"/>
</dbReference>
<dbReference type="GO" id="GO:0051726">
    <property type="term" value="P:regulation of cell cycle"/>
    <property type="evidence" value="ECO:0000315"/>
    <property type="project" value="MGI"/>
</dbReference>
<dbReference type="GO" id="GO:1902749">
    <property type="term" value="P:regulation of cell cycle G2/M phase transition"/>
    <property type="evidence" value="ECO:0007669"/>
    <property type="project" value="Ensembl"/>
</dbReference>
<dbReference type="GO" id="GO:0042127">
    <property type="term" value="P:regulation of cell population proliferation"/>
    <property type="evidence" value="ECO:0000315"/>
    <property type="project" value="MGI"/>
</dbReference>
<dbReference type="GO" id="GO:2000772">
    <property type="term" value="P:regulation of cellular senescence"/>
    <property type="evidence" value="ECO:0000316"/>
    <property type="project" value="MGI"/>
</dbReference>
<dbReference type="GO" id="GO:0043516">
    <property type="term" value="P:regulation of DNA damage response, signal transduction by p53 class mediator"/>
    <property type="evidence" value="ECO:0000316"/>
    <property type="project" value="MGI"/>
</dbReference>
<dbReference type="GO" id="GO:0006355">
    <property type="term" value="P:regulation of DNA-templated transcription"/>
    <property type="evidence" value="ECO:0000314"/>
    <property type="project" value="MGI"/>
</dbReference>
<dbReference type="GO" id="GO:2000269">
    <property type="term" value="P:regulation of fibroblast apoptotic process"/>
    <property type="evidence" value="ECO:0000316"/>
    <property type="project" value="MGI"/>
</dbReference>
<dbReference type="GO" id="GO:1902253">
    <property type="term" value="P:regulation of intrinsic apoptotic signaling pathway by p53 class mediator"/>
    <property type="evidence" value="ECO:0000315"/>
    <property type="project" value="MGI"/>
</dbReference>
<dbReference type="GO" id="GO:1902108">
    <property type="term" value="P:regulation of mitochondrial membrane permeability involved in apoptotic process"/>
    <property type="evidence" value="ECO:0000316"/>
    <property type="project" value="MGI"/>
</dbReference>
<dbReference type="GO" id="GO:0007346">
    <property type="term" value="P:regulation of mitotic cell cycle"/>
    <property type="evidence" value="ECO:0000314"/>
    <property type="project" value="MGI"/>
</dbReference>
<dbReference type="GO" id="GO:0043523">
    <property type="term" value="P:regulation of neuron apoptotic process"/>
    <property type="evidence" value="ECO:0000316"/>
    <property type="project" value="MGI"/>
</dbReference>
<dbReference type="GO" id="GO:0070243">
    <property type="term" value="P:regulation of thymocyte apoptotic process"/>
    <property type="evidence" value="ECO:0000316"/>
    <property type="project" value="MGI"/>
</dbReference>
<dbReference type="GO" id="GO:0034103">
    <property type="term" value="P:regulation of tissue remodeling"/>
    <property type="evidence" value="ECO:0000315"/>
    <property type="project" value="MGI"/>
</dbReference>
<dbReference type="GO" id="GO:0006357">
    <property type="term" value="P:regulation of transcription by RNA polymerase II"/>
    <property type="evidence" value="ECO:0000314"/>
    <property type="project" value="MGI"/>
</dbReference>
<dbReference type="GO" id="GO:0001836">
    <property type="term" value="P:release of cytochrome c from mitochondria"/>
    <property type="evidence" value="ECO:0000314"/>
    <property type="project" value="MGI"/>
</dbReference>
<dbReference type="GO" id="GO:0090399">
    <property type="term" value="P:replicative senescence"/>
    <property type="evidence" value="ECO:0007669"/>
    <property type="project" value="Ensembl"/>
</dbReference>
<dbReference type="GO" id="GO:0010332">
    <property type="term" value="P:response to gamma radiation"/>
    <property type="evidence" value="ECO:0000314"/>
    <property type="project" value="MGI"/>
</dbReference>
<dbReference type="GO" id="GO:0002931">
    <property type="term" value="P:response to ischemia"/>
    <property type="evidence" value="ECO:0000315"/>
    <property type="project" value="MGI"/>
</dbReference>
<dbReference type="GO" id="GO:0006979">
    <property type="term" value="P:response to oxidative stress"/>
    <property type="evidence" value="ECO:0000315"/>
    <property type="project" value="MGI"/>
</dbReference>
<dbReference type="GO" id="GO:0009651">
    <property type="term" value="P:response to salt stress"/>
    <property type="evidence" value="ECO:0000316"/>
    <property type="project" value="MGI"/>
</dbReference>
<dbReference type="GO" id="GO:0009411">
    <property type="term" value="P:response to UV"/>
    <property type="evidence" value="ECO:0000314"/>
    <property type="project" value="MGI"/>
</dbReference>
<dbReference type="GO" id="GO:0010165">
    <property type="term" value="P:response to X-ray"/>
    <property type="evidence" value="ECO:0000314"/>
    <property type="project" value="MGI"/>
</dbReference>
<dbReference type="GO" id="GO:0009410">
    <property type="term" value="P:response to xenobiotic stimulus"/>
    <property type="evidence" value="ECO:0000314"/>
    <property type="project" value="MGI"/>
</dbReference>
<dbReference type="GO" id="GO:0009303">
    <property type="term" value="P:rRNA transcription"/>
    <property type="evidence" value="ECO:0000316"/>
    <property type="project" value="MGI"/>
</dbReference>
<dbReference type="GO" id="GO:0072331">
    <property type="term" value="P:signal transduction by p53 class mediator"/>
    <property type="evidence" value="ECO:0000315"/>
    <property type="project" value="MGI"/>
</dbReference>
<dbReference type="GO" id="GO:0001756">
    <property type="term" value="P:somitogenesis"/>
    <property type="evidence" value="ECO:0000316"/>
    <property type="project" value="MGI"/>
</dbReference>
<dbReference type="GO" id="GO:0072089">
    <property type="term" value="P:stem cell proliferation"/>
    <property type="evidence" value="ECO:0000316"/>
    <property type="project" value="MGI"/>
</dbReference>
<dbReference type="GO" id="GO:0033077">
    <property type="term" value="P:T cell differentiation in thymus"/>
    <property type="evidence" value="ECO:0000316"/>
    <property type="project" value="MGI"/>
</dbReference>
<dbReference type="GO" id="GO:0002360">
    <property type="term" value="P:T cell lineage commitment"/>
    <property type="evidence" value="ECO:0000315"/>
    <property type="project" value="MGI"/>
</dbReference>
<dbReference type="GO" id="GO:0002309">
    <property type="term" value="P:T cell proliferation involved in immune response"/>
    <property type="evidence" value="ECO:0000316"/>
    <property type="project" value="MGI"/>
</dbReference>
<dbReference type="GO" id="GO:0070242">
    <property type="term" value="P:thymocyte apoptotic process"/>
    <property type="evidence" value="ECO:0000315"/>
    <property type="project" value="MGI"/>
</dbReference>
<dbReference type="GO" id="GO:0045815">
    <property type="term" value="P:transcription initiation-coupled chromatin remodeling"/>
    <property type="evidence" value="ECO:0007669"/>
    <property type="project" value="Ensembl"/>
</dbReference>
<dbReference type="GO" id="GO:0007179">
    <property type="term" value="P:transforming growth factor beta receptor signaling pathway"/>
    <property type="evidence" value="ECO:0000316"/>
    <property type="project" value="MGI"/>
</dbReference>
<dbReference type="GO" id="GO:0033209">
    <property type="term" value="P:tumor necrosis factor-mediated signaling pathway"/>
    <property type="evidence" value="ECO:0007669"/>
    <property type="project" value="Ensembl"/>
</dbReference>
<dbReference type="GO" id="GO:0060333">
    <property type="term" value="P:type II interferon-mediated signaling pathway"/>
    <property type="evidence" value="ECO:0000315"/>
    <property type="project" value="CAFA"/>
</dbReference>
<dbReference type="GO" id="GO:0016032">
    <property type="term" value="P:viral process"/>
    <property type="evidence" value="ECO:0007669"/>
    <property type="project" value="Ensembl"/>
</dbReference>
<dbReference type="CDD" id="cd08367">
    <property type="entry name" value="P53"/>
    <property type="match status" value="1"/>
</dbReference>
<dbReference type="FunFam" id="2.60.40.720:FF:000003">
    <property type="entry name" value="Cellular tumor antigen p53"/>
    <property type="match status" value="1"/>
</dbReference>
<dbReference type="FunFam" id="4.10.170.10:FF:000003">
    <property type="entry name" value="Cellular tumor antigen p53"/>
    <property type="match status" value="1"/>
</dbReference>
<dbReference type="Gene3D" id="2.60.40.720">
    <property type="match status" value="1"/>
</dbReference>
<dbReference type="Gene3D" id="6.10.50.20">
    <property type="match status" value="1"/>
</dbReference>
<dbReference type="Gene3D" id="4.10.170.10">
    <property type="entry name" value="p53-like tetramerisation domain"/>
    <property type="match status" value="1"/>
</dbReference>
<dbReference type="InterPro" id="IPR008967">
    <property type="entry name" value="p53-like_TF_DNA-bd_sf"/>
</dbReference>
<dbReference type="InterPro" id="IPR012346">
    <property type="entry name" value="p53/RUNT-type_TF_DNA-bd_sf"/>
</dbReference>
<dbReference type="InterPro" id="IPR011615">
    <property type="entry name" value="p53_DNA-bd"/>
</dbReference>
<dbReference type="InterPro" id="IPR036674">
    <property type="entry name" value="p53_tetramer_sf"/>
</dbReference>
<dbReference type="InterPro" id="IPR010991">
    <property type="entry name" value="p53_tetrameristn"/>
</dbReference>
<dbReference type="InterPro" id="IPR013872">
    <property type="entry name" value="p53_transactivation_domain"/>
</dbReference>
<dbReference type="InterPro" id="IPR002117">
    <property type="entry name" value="p53_tumour_suppressor"/>
</dbReference>
<dbReference type="PANTHER" id="PTHR11447">
    <property type="entry name" value="CELLULAR TUMOR ANTIGEN P53"/>
    <property type="match status" value="1"/>
</dbReference>
<dbReference type="PANTHER" id="PTHR11447:SF6">
    <property type="entry name" value="CELLULAR TUMOR ANTIGEN P53"/>
    <property type="match status" value="1"/>
</dbReference>
<dbReference type="Pfam" id="PF00870">
    <property type="entry name" value="P53"/>
    <property type="match status" value="1"/>
</dbReference>
<dbReference type="Pfam" id="PF08563">
    <property type="entry name" value="P53_TAD"/>
    <property type="match status" value="1"/>
</dbReference>
<dbReference type="Pfam" id="PF07710">
    <property type="entry name" value="P53_tetramer"/>
    <property type="match status" value="1"/>
</dbReference>
<dbReference type="PRINTS" id="PR00386">
    <property type="entry name" value="P53SUPPRESSR"/>
</dbReference>
<dbReference type="SUPFAM" id="SSF47719">
    <property type="entry name" value="p53 tetramerization domain"/>
    <property type="match status" value="1"/>
</dbReference>
<dbReference type="SUPFAM" id="SSF49417">
    <property type="entry name" value="p53-like transcription factors"/>
    <property type="match status" value="1"/>
</dbReference>
<dbReference type="PROSITE" id="PS00348">
    <property type="entry name" value="P53"/>
    <property type="match status" value="1"/>
</dbReference>
<organism>
    <name type="scientific">Mus musculus</name>
    <name type="common">Mouse</name>
    <dbReference type="NCBI Taxonomy" id="10090"/>
    <lineage>
        <taxon>Eukaryota</taxon>
        <taxon>Metazoa</taxon>
        <taxon>Chordata</taxon>
        <taxon>Craniata</taxon>
        <taxon>Vertebrata</taxon>
        <taxon>Euteleostomi</taxon>
        <taxon>Mammalia</taxon>
        <taxon>Eutheria</taxon>
        <taxon>Euarchontoglires</taxon>
        <taxon>Glires</taxon>
        <taxon>Rodentia</taxon>
        <taxon>Myomorpha</taxon>
        <taxon>Muroidea</taxon>
        <taxon>Muridae</taxon>
        <taxon>Murinae</taxon>
        <taxon>Mus</taxon>
        <taxon>Mus</taxon>
    </lineage>
</organism>
<feature type="chain" id="PRO_0000185709" description="Cellular tumor antigen p53">
    <location>
        <begin position="1"/>
        <end position="390"/>
    </location>
</feature>
<feature type="DNA-binding region" evidence="2">
    <location>
        <begin position="99"/>
        <end position="289"/>
    </location>
</feature>
<feature type="region of interest" description="Interaction with CCAR2" evidence="2">
    <location>
        <begin position="4"/>
        <end position="317"/>
    </location>
</feature>
<feature type="region of interest" description="Transcription activation (acidic)">
    <location>
        <begin position="4"/>
        <end position="45"/>
    </location>
</feature>
<feature type="region of interest" description="Interaction with WWOX" evidence="1">
    <location>
        <begin position="63"/>
        <end position="107"/>
    </location>
</feature>
<feature type="region of interest" description="Interaction with HIPK1" evidence="8">
    <location>
        <begin position="97"/>
        <end position="367"/>
    </location>
</feature>
<feature type="region of interest" description="Required for interaction with ZNF385A" evidence="1">
    <location>
        <begin position="97"/>
        <end position="297"/>
    </location>
</feature>
<feature type="region of interest" description="Required for interaction with FBXO42" evidence="1">
    <location>
        <begin position="110"/>
        <end position="233"/>
    </location>
</feature>
<feature type="region of interest" description="Interaction with AXIN1" evidence="11">
    <location>
        <begin position="113"/>
        <end position="289"/>
    </location>
</feature>
<feature type="region of interest" description="Interaction with E4F1" evidence="1">
    <location>
        <begin position="256"/>
        <end position="294"/>
    </location>
</feature>
<feature type="region of interest" description="Interaction with DNA">
    <location>
        <begin position="270"/>
        <end position="277"/>
    </location>
</feature>
<feature type="region of interest" description="Interaction with HIPK2" evidence="1">
    <location>
        <begin position="316"/>
        <end position="357"/>
    </location>
</feature>
<feature type="region of interest" description="Oligomerization">
    <location>
        <begin position="322"/>
        <end position="353"/>
    </location>
</feature>
<feature type="region of interest" description="Disordered" evidence="4">
    <location>
        <begin position="348"/>
        <end position="390"/>
    </location>
</feature>
<feature type="region of interest" description="Interaction with USP7" evidence="1">
    <location>
        <begin position="356"/>
        <end position="360"/>
    </location>
</feature>
<feature type="region of interest" description="Basic (repression of DNA-binding)">
    <location>
        <begin position="365"/>
        <end position="384"/>
    </location>
</feature>
<feature type="short sequence motif" description="Bipartite nuclear localization signal" evidence="1">
    <location>
        <begin position="302"/>
        <end position="318"/>
    </location>
</feature>
<feature type="short sequence motif" description="Nuclear export signal" evidence="1">
    <location>
        <begin position="336"/>
        <end position="347"/>
    </location>
</feature>
<feature type="short sequence motif" description="[KR]-[STA]-K motif">
    <location>
        <begin position="367"/>
        <end position="369"/>
    </location>
</feature>
<feature type="compositionally biased region" description="Basic and acidic residues" evidence="4">
    <location>
        <begin position="348"/>
        <end position="361"/>
    </location>
</feature>
<feature type="compositionally biased region" description="Basic residues" evidence="4">
    <location>
        <begin position="367"/>
        <end position="382"/>
    </location>
</feature>
<feature type="binding site" evidence="12">
    <location>
        <position position="173"/>
    </location>
    <ligand>
        <name>Zn(2+)</name>
        <dbReference type="ChEBI" id="CHEBI:29105"/>
    </ligand>
</feature>
<feature type="binding site" evidence="12">
    <location>
        <position position="176"/>
    </location>
    <ligand>
        <name>Zn(2+)</name>
        <dbReference type="ChEBI" id="CHEBI:29105"/>
    </ligand>
</feature>
<feature type="binding site" evidence="12">
    <location>
        <position position="235"/>
    </location>
    <ligand>
        <name>Zn(2+)</name>
        <dbReference type="ChEBI" id="CHEBI:29105"/>
    </ligand>
</feature>
<feature type="binding site" evidence="12">
    <location>
        <position position="239"/>
    </location>
    <ligand>
        <name>Zn(2+)</name>
        <dbReference type="ChEBI" id="CHEBI:29105"/>
    </ligand>
</feature>
<feature type="site" description="Interaction with DNA" evidence="12">
    <location>
        <position position="117"/>
    </location>
</feature>
<feature type="modified residue" description="Phosphoserine; by HIPK4" evidence="15">
    <location>
        <position position="12"/>
    </location>
</feature>
<feature type="modified residue" description="Phosphoserine; by CDK5, PRPK, AMPK, NUAK1 and ATM" evidence="10">
    <location>
        <position position="18"/>
    </location>
</feature>
<feature type="modified residue" description="Phosphothreonine; by CK1, VRK1 and VRK2" evidence="2">
    <location>
        <position position="21"/>
    </location>
</feature>
<feature type="modified residue" description="Phosphoserine; by CHEK2, CK1 and PLK3" evidence="2">
    <location>
        <position position="23"/>
    </location>
</feature>
<feature type="modified residue" description="Phosphoserine; by MAPKAPK5" evidence="13">
    <location>
        <position position="37"/>
    </location>
</feature>
<feature type="modified residue" description="N6-acetyllysine" evidence="2">
    <location>
        <position position="117"/>
    </location>
</feature>
<feature type="modified residue" description="N6-lactoyllysine" evidence="2">
    <location>
        <position position="117"/>
    </location>
</feature>
<feature type="modified residue" description="N6-lactoyllysine" evidence="2">
    <location>
        <position position="136"/>
    </location>
</feature>
<feature type="modified residue" description="Phosphoserine; by AURKB" evidence="2">
    <location>
        <position position="180"/>
    </location>
</feature>
<feature type="modified residue" description="Phosphoserine; by AURKB" evidence="2">
    <location>
        <position position="266"/>
    </location>
</feature>
<feature type="modified residue" description="Phosphothreonine; by AURKB" evidence="2">
    <location>
        <position position="281"/>
    </location>
</feature>
<feature type="modified residue" description="N6-acetyllysine" evidence="2">
    <location>
        <position position="302"/>
    </location>
</feature>
<feature type="modified residue" description="Phosphoserine; by AURKA, CDK1 and CDK2" evidence="2">
    <location>
        <position position="312"/>
    </location>
</feature>
<feature type="modified residue" description="N6-acetyllysine" evidence="28">
    <location>
        <position position="318"/>
    </location>
</feature>
<feature type="modified residue" description="Omega-N-methylarginine" evidence="2">
    <location>
        <position position="330"/>
    </location>
</feature>
<feature type="modified residue" description="Symmetric dimethylarginine" evidence="2">
    <location>
        <position position="332"/>
    </location>
</feature>
<feature type="modified residue" description="Symmetric dimethylarginine" evidence="2">
    <location>
        <position position="334"/>
    </location>
</feature>
<feature type="modified residue" description="N6,N6-dimethyllysine; alternate" evidence="2">
    <location>
        <position position="367"/>
    </location>
</feature>
<feature type="modified residue" description="N6-methyllysine; by SMYD2; alternate" evidence="2">
    <location>
        <position position="367"/>
    </location>
</feature>
<feature type="modified residue" description="N6-methyllysine; by SETD7" evidence="2">
    <location>
        <position position="369"/>
    </location>
</feature>
<feature type="modified residue" description="N6,N6-dimethyllysine; by EHMT1 and EHMT2; alternate" evidence="2">
    <location>
        <position position="370"/>
    </location>
</feature>
<feature type="modified residue" description="N6-acetyllysine; alternate" evidence="2">
    <location>
        <position position="370"/>
    </location>
</feature>
<feature type="modified residue" description="N6-acetyllysine" evidence="2">
    <location>
        <position position="378"/>
    </location>
</feature>
<feature type="modified residue" description="N6,N6-dimethyllysine; alternate" evidence="2">
    <location>
        <position position="379"/>
    </location>
</feature>
<feature type="modified residue" description="N6-acetyllysine; alternate" evidence="2">
    <location>
        <position position="379"/>
    </location>
</feature>
<feature type="modified residue" description="N6-methyllysine; by KMT5A; alternate" evidence="2">
    <location>
        <position position="379"/>
    </location>
</feature>
<feature type="modified residue" description="Phosphoserine; by CK2, CDK2 and NUAK1" evidence="2">
    <location>
        <position position="389"/>
    </location>
</feature>
<feature type="cross-link" description="Glycyl lysine isopeptide (Lys-Gly) (interchain with G-Cter in ubiquitin)" evidence="2">
    <location>
        <position position="27"/>
    </location>
</feature>
<feature type="cross-link" description="Glycyl lysine isopeptide (Lys-Gly) (interchain with G-Cter in ubiquitin)" evidence="2">
    <location>
        <position position="288"/>
    </location>
</feature>
<feature type="cross-link" description="Glycyl lysine isopeptide (Lys-Gly) (interchain with G-Cter in ubiquitin)" evidence="2">
    <location>
        <position position="289"/>
    </location>
</feature>
<feature type="cross-link" description="Glycyl lysine isopeptide (Lys-Gly) (interchain with G-Cter in ubiquitin)" evidence="2">
    <location>
        <position position="348"/>
    </location>
</feature>
<feature type="cross-link" description="Glycyl lysine isopeptide (Lys-Gly) (interchain with G-Cter in SUMO)" evidence="1">
    <location>
        <position position="383"/>
    </location>
</feature>
<feature type="sequence variant" description="Can cooperate with an activated Ras to transform fibroblasts." evidence="25">
    <original>A</original>
    <variation>V</variation>
    <location>
        <position position="135"/>
    </location>
</feature>
<feature type="sequence variant" description="In clone P53-M11.">
    <original>E</original>
    <variation>G</variation>
    <location>
        <position position="168"/>
    </location>
</feature>
<feature type="sequence variant">
    <original>L</original>
    <variation>R</variation>
    <location>
        <position position="191"/>
    </location>
</feature>
<feature type="sequence conflict" description="In Ref. 3; CAA25323." evidence="27" ref="3">
    <original>Q</original>
    <variation>R</variation>
    <location>
        <position position="48"/>
    </location>
</feature>
<feature type="sequence conflict" description="In Ref. 3; CAA25323." evidence="27" ref="3">
    <original>PVA</original>
    <variation>QW</variation>
    <location>
        <begin position="79"/>
        <end position="81"/>
    </location>
</feature>
<feature type="helix" evidence="29">
    <location>
        <begin position="102"/>
        <end position="104"/>
    </location>
</feature>
<feature type="strand" evidence="29">
    <location>
        <begin position="107"/>
        <end position="109"/>
    </location>
</feature>
<feature type="helix" evidence="30">
    <location>
        <begin position="116"/>
        <end position="119"/>
    </location>
</feature>
<feature type="strand" evidence="29">
    <location>
        <begin position="120"/>
        <end position="124"/>
    </location>
</feature>
<feature type="turn" evidence="29">
    <location>
        <begin position="125"/>
        <end position="128"/>
    </location>
</feature>
<feature type="strand" evidence="29">
    <location>
        <begin position="129"/>
        <end position="132"/>
    </location>
</feature>
<feature type="strand" evidence="29">
    <location>
        <begin position="137"/>
        <end position="143"/>
    </location>
</feature>
<feature type="strand" evidence="29">
    <location>
        <begin position="153"/>
        <end position="162"/>
    </location>
</feature>
<feature type="turn" evidence="29">
    <location>
        <begin position="163"/>
        <end position="167"/>
    </location>
</feature>
<feature type="helix" evidence="29">
    <location>
        <begin position="174"/>
        <end position="178"/>
    </location>
</feature>
<feature type="strand" evidence="29">
    <location>
        <begin position="184"/>
        <end position="186"/>
    </location>
</feature>
<feature type="strand" evidence="29">
    <location>
        <begin position="191"/>
        <end position="196"/>
    </location>
</feature>
<feature type="strand" evidence="29">
    <location>
        <begin position="201"/>
        <end position="204"/>
    </location>
</feature>
<feature type="turn" evidence="29">
    <location>
        <begin position="206"/>
        <end position="208"/>
    </location>
</feature>
<feature type="strand" evidence="29">
    <location>
        <begin position="211"/>
        <end position="216"/>
    </location>
</feature>
<feature type="strand" evidence="29">
    <location>
        <begin position="225"/>
        <end position="233"/>
    </location>
</feature>
<feature type="helix" evidence="29">
    <location>
        <begin position="238"/>
        <end position="240"/>
    </location>
</feature>
<feature type="helix" evidence="29">
    <location>
        <begin position="242"/>
        <end position="245"/>
    </location>
</feature>
<feature type="strand" evidence="29">
    <location>
        <begin position="248"/>
        <end position="255"/>
    </location>
</feature>
<feature type="strand" evidence="29">
    <location>
        <begin position="261"/>
        <end position="271"/>
    </location>
</feature>
<feature type="helix" evidence="29">
    <location>
        <begin position="275"/>
        <end position="286"/>
    </location>
</feature>
<feature type="turn" evidence="30">
    <location>
        <begin position="288"/>
        <end position="290"/>
    </location>
</feature>
<keyword id="KW-0002">3D-structure</keyword>
<keyword id="KW-0007">Acetylation</keyword>
<keyword id="KW-0010">Activator</keyword>
<keyword id="KW-0053">Apoptosis</keyword>
<keyword id="KW-0090">Biological rhythms</keyword>
<keyword id="KW-0131">Cell cycle</keyword>
<keyword id="KW-0963">Cytoplasm</keyword>
<keyword id="KW-0206">Cytoskeleton</keyword>
<keyword id="KW-0225">Disease variant</keyword>
<keyword id="KW-0238">DNA-binding</keyword>
<keyword id="KW-0256">Endoplasmic reticulum</keyword>
<keyword id="KW-1017">Isopeptide bond</keyword>
<keyword id="KW-0479">Metal-binding</keyword>
<keyword id="KW-0488">Methylation</keyword>
<keyword id="KW-0496">Mitochondrion</keyword>
<keyword id="KW-1210">Necrosis</keyword>
<keyword id="KW-0539">Nucleus</keyword>
<keyword id="KW-0597">Phosphoprotein</keyword>
<keyword id="KW-1185">Reference proteome</keyword>
<keyword id="KW-0678">Repressor</keyword>
<keyword id="KW-0804">Transcription</keyword>
<keyword id="KW-0805">Transcription regulation</keyword>
<keyword id="KW-0043">Tumor suppressor</keyword>
<keyword id="KW-0832">Ubl conjugation</keyword>
<keyword id="KW-0862">Zinc</keyword>
<evidence type="ECO:0000250" key="1"/>
<evidence type="ECO:0000250" key="2">
    <source>
        <dbReference type="UniProtKB" id="P04637"/>
    </source>
</evidence>
<evidence type="ECO:0000250" key="3">
    <source>
        <dbReference type="UniProtKB" id="P10361"/>
    </source>
</evidence>
<evidence type="ECO:0000256" key="4">
    <source>
        <dbReference type="SAM" id="MobiDB-lite"/>
    </source>
</evidence>
<evidence type="ECO:0000269" key="5">
    <source>
    </source>
</evidence>
<evidence type="ECO:0000269" key="6">
    <source>
    </source>
</evidence>
<evidence type="ECO:0000269" key="7">
    <source>
    </source>
</evidence>
<evidence type="ECO:0000269" key="8">
    <source>
    </source>
</evidence>
<evidence type="ECO:0000269" key="9">
    <source>
    </source>
</evidence>
<evidence type="ECO:0000269" key="10">
    <source>
    </source>
</evidence>
<evidence type="ECO:0000269" key="11">
    <source>
    </source>
</evidence>
<evidence type="ECO:0000269" key="12">
    <source>
    </source>
</evidence>
<evidence type="ECO:0000269" key="13">
    <source>
    </source>
</evidence>
<evidence type="ECO:0000269" key="14">
    <source>
    </source>
</evidence>
<evidence type="ECO:0000269" key="15">
    <source>
    </source>
</evidence>
<evidence type="ECO:0000269" key="16">
    <source>
    </source>
</evidence>
<evidence type="ECO:0000269" key="17">
    <source>
    </source>
</evidence>
<evidence type="ECO:0000269" key="18">
    <source>
    </source>
</evidence>
<evidence type="ECO:0000269" key="19">
    <source>
    </source>
</evidence>
<evidence type="ECO:0000269" key="20">
    <source>
    </source>
</evidence>
<evidence type="ECO:0000269" key="21">
    <source>
    </source>
</evidence>
<evidence type="ECO:0000269" key="22">
    <source>
    </source>
</evidence>
<evidence type="ECO:0000269" key="23">
    <source>
    </source>
</evidence>
<evidence type="ECO:0000269" key="24">
    <source>
    </source>
</evidence>
<evidence type="ECO:0000269" key="25">
    <source>
    </source>
</evidence>
<evidence type="ECO:0000269" key="26">
    <source>
    </source>
</evidence>
<evidence type="ECO:0000305" key="27"/>
<evidence type="ECO:0007744" key="28">
    <source>
    </source>
</evidence>
<evidence type="ECO:0007829" key="29">
    <source>
        <dbReference type="PDB" id="2P52"/>
    </source>
</evidence>
<evidence type="ECO:0007829" key="30">
    <source>
        <dbReference type="PDB" id="3EXJ"/>
    </source>
</evidence>